<accession>P63279</accession>
<accession>D3DU69</accession>
<accession>P50550</accession>
<accession>Q15698</accession>
<accession>Q59GX1</accession>
<accession>Q86VB3</accession>
<dbReference type="EC" id="2.3.2.-" evidence="38"/>
<dbReference type="EMBL" id="X96427">
    <property type="protein sequence ID" value="CAA65287.1"/>
    <property type="molecule type" value="mRNA"/>
</dbReference>
<dbReference type="EMBL" id="U45328">
    <property type="protein sequence ID" value="AAA86662.1"/>
    <property type="molecule type" value="mRNA"/>
</dbReference>
<dbReference type="EMBL" id="D45050">
    <property type="protein sequence ID" value="BAA08091.1"/>
    <property type="molecule type" value="mRNA"/>
</dbReference>
<dbReference type="EMBL" id="U29092">
    <property type="protein sequence ID" value="AAC51361.1"/>
    <property type="molecule type" value="mRNA"/>
</dbReference>
<dbReference type="EMBL" id="U31933">
    <property type="protein sequence ID" value="AAB02181.1"/>
    <property type="molecule type" value="mRNA"/>
</dbReference>
<dbReference type="EMBL" id="U31882">
    <property type="protein sequence ID" value="AAC50603.1"/>
    <property type="molecule type" value="mRNA"/>
</dbReference>
<dbReference type="EMBL" id="U66867">
    <property type="protein sequence ID" value="AAC50716.1"/>
    <property type="molecule type" value="mRNA"/>
</dbReference>
<dbReference type="EMBL" id="U66818">
    <property type="protein sequence ID" value="AAC50715.1"/>
    <property type="molecule type" value="mRNA"/>
</dbReference>
<dbReference type="EMBL" id="U38785">
    <property type="protein sequence ID" value="AAB09410.1"/>
    <property type="molecule type" value="mRNA"/>
</dbReference>
<dbReference type="EMBL" id="AJ002385">
    <property type="protein sequence ID" value="CAA05359.1"/>
    <property type="molecule type" value="mRNA"/>
</dbReference>
<dbReference type="EMBL" id="BT006932">
    <property type="protein sequence ID" value="AAP35578.1"/>
    <property type="molecule type" value="mRNA"/>
</dbReference>
<dbReference type="EMBL" id="AB208988">
    <property type="protein sequence ID" value="BAD92225.1"/>
    <property type="status" value="ALT_INIT"/>
    <property type="molecule type" value="mRNA"/>
</dbReference>
<dbReference type="EMBL" id="AE006466">
    <property type="protein sequence ID" value="AAK61274.1"/>
    <property type="molecule type" value="Genomic_DNA"/>
</dbReference>
<dbReference type="EMBL" id="AL031714">
    <property type="status" value="NOT_ANNOTATED_CDS"/>
    <property type="molecule type" value="Genomic_DNA"/>
</dbReference>
<dbReference type="EMBL" id="CH471112">
    <property type="protein sequence ID" value="EAW85673.1"/>
    <property type="molecule type" value="Genomic_DNA"/>
</dbReference>
<dbReference type="EMBL" id="CH471112">
    <property type="protein sequence ID" value="EAW85676.1"/>
    <property type="molecule type" value="Genomic_DNA"/>
</dbReference>
<dbReference type="EMBL" id="CH471112">
    <property type="protein sequence ID" value="EAW85677.1"/>
    <property type="molecule type" value="Genomic_DNA"/>
</dbReference>
<dbReference type="EMBL" id="CH471112">
    <property type="protein sequence ID" value="EAW85678.1"/>
    <property type="molecule type" value="Genomic_DNA"/>
</dbReference>
<dbReference type="EMBL" id="CH471112">
    <property type="protein sequence ID" value="EAW85679.1"/>
    <property type="molecule type" value="Genomic_DNA"/>
</dbReference>
<dbReference type="EMBL" id="BC000427">
    <property type="protein sequence ID" value="AAH00427.1"/>
    <property type="molecule type" value="mRNA"/>
</dbReference>
<dbReference type="EMBL" id="BC004429">
    <property type="protein sequence ID" value="AAH04429.1"/>
    <property type="molecule type" value="mRNA"/>
</dbReference>
<dbReference type="EMBL" id="BC051289">
    <property type="protein sequence ID" value="AAH51289.3"/>
    <property type="status" value="ALT_INIT"/>
    <property type="molecule type" value="mRNA"/>
</dbReference>
<dbReference type="CCDS" id="CCDS10433.1"/>
<dbReference type="PIR" id="JC6056">
    <property type="entry name" value="JC6056"/>
</dbReference>
<dbReference type="RefSeq" id="NP_003336.1">
    <property type="nucleotide sequence ID" value="NM_003345.5"/>
</dbReference>
<dbReference type="RefSeq" id="NP_919235.1">
    <property type="nucleotide sequence ID" value="NM_194259.3"/>
</dbReference>
<dbReference type="RefSeq" id="NP_919236.1">
    <property type="nucleotide sequence ID" value="NM_194260.3"/>
</dbReference>
<dbReference type="RefSeq" id="NP_919237.1">
    <property type="nucleotide sequence ID" value="NM_194261.3"/>
</dbReference>
<dbReference type="RefSeq" id="XP_016879129.1">
    <property type="nucleotide sequence ID" value="XM_017023640.1"/>
</dbReference>
<dbReference type="PDB" id="1A3S">
    <property type="method" value="X-ray"/>
    <property type="resolution" value="2.80 A"/>
    <property type="chains" value="A=1-158"/>
</dbReference>
<dbReference type="PDB" id="1KPS">
    <property type="method" value="X-ray"/>
    <property type="resolution" value="2.50 A"/>
    <property type="chains" value="A/C=1-158"/>
</dbReference>
<dbReference type="PDB" id="1Z5S">
    <property type="method" value="X-ray"/>
    <property type="resolution" value="3.01 A"/>
    <property type="chains" value="A=1-158"/>
</dbReference>
<dbReference type="PDB" id="2GRN">
    <property type="method" value="X-ray"/>
    <property type="resolution" value="1.80 A"/>
    <property type="chains" value="A=1-158"/>
</dbReference>
<dbReference type="PDB" id="2GRO">
    <property type="method" value="X-ray"/>
    <property type="resolution" value="1.70 A"/>
    <property type="chains" value="A=1-158"/>
</dbReference>
<dbReference type="PDB" id="2GRP">
    <property type="method" value="X-ray"/>
    <property type="resolution" value="2.05 A"/>
    <property type="chains" value="A=1-158"/>
</dbReference>
<dbReference type="PDB" id="2GRQ">
    <property type="method" value="X-ray"/>
    <property type="resolution" value="1.70 A"/>
    <property type="chains" value="A=1-158"/>
</dbReference>
<dbReference type="PDB" id="2GRR">
    <property type="method" value="X-ray"/>
    <property type="resolution" value="1.30 A"/>
    <property type="chains" value="A=1-158"/>
</dbReference>
<dbReference type="PDB" id="2O25">
    <property type="method" value="X-ray"/>
    <property type="resolution" value="2.60 A"/>
    <property type="chains" value="C/D=1-158"/>
</dbReference>
<dbReference type="PDB" id="2PE6">
    <property type="method" value="X-ray"/>
    <property type="resolution" value="2.40 A"/>
    <property type="chains" value="A=1-158"/>
</dbReference>
<dbReference type="PDB" id="2PX9">
    <property type="method" value="NMR"/>
    <property type="chains" value="B=1-158"/>
</dbReference>
<dbReference type="PDB" id="2XWU">
    <property type="method" value="X-ray"/>
    <property type="resolution" value="2.80 A"/>
    <property type="chains" value="A=1-158"/>
</dbReference>
<dbReference type="PDB" id="3A4S">
    <property type="method" value="X-ray"/>
    <property type="resolution" value="2.70 A"/>
    <property type="chains" value="A/B=1-158"/>
</dbReference>
<dbReference type="PDB" id="3UIN">
    <property type="method" value="X-ray"/>
    <property type="resolution" value="2.60 A"/>
    <property type="chains" value="A=1-158"/>
</dbReference>
<dbReference type="PDB" id="3UIO">
    <property type="method" value="X-ray"/>
    <property type="resolution" value="2.60 A"/>
    <property type="chains" value="A=1-158"/>
</dbReference>
<dbReference type="PDB" id="3UIP">
    <property type="method" value="X-ray"/>
    <property type="resolution" value="2.29 A"/>
    <property type="chains" value="A=1-158"/>
</dbReference>
<dbReference type="PDB" id="4W5V">
    <property type="method" value="X-ray"/>
    <property type="resolution" value="2.50 A"/>
    <property type="chains" value="A=1-158"/>
</dbReference>
<dbReference type="PDB" id="4Y1L">
    <property type="method" value="X-ray"/>
    <property type="resolution" value="2.70 A"/>
    <property type="chains" value="A/B=1-158"/>
</dbReference>
<dbReference type="PDB" id="5D2M">
    <property type="method" value="X-ray"/>
    <property type="resolution" value="2.40 A"/>
    <property type="chains" value="A/D=1-158"/>
</dbReference>
<dbReference type="PDB" id="5F6D">
    <property type="method" value="X-ray"/>
    <property type="resolution" value="1.55 A"/>
    <property type="chains" value="A=2-158"/>
</dbReference>
<dbReference type="PDB" id="5F6E">
    <property type="method" value="X-ray"/>
    <property type="resolution" value="1.12 A"/>
    <property type="chains" value="A=2-158"/>
</dbReference>
<dbReference type="PDB" id="5F6U">
    <property type="method" value="X-ray"/>
    <property type="resolution" value="1.55 A"/>
    <property type="chains" value="A=2-158"/>
</dbReference>
<dbReference type="PDB" id="5F6V">
    <property type="method" value="X-ray"/>
    <property type="resolution" value="1.49 A"/>
    <property type="chains" value="A=2-158"/>
</dbReference>
<dbReference type="PDB" id="5F6W">
    <property type="method" value="X-ray"/>
    <property type="resolution" value="1.70 A"/>
    <property type="chains" value="A=2-158"/>
</dbReference>
<dbReference type="PDB" id="5F6X">
    <property type="method" value="X-ray"/>
    <property type="resolution" value="1.56 A"/>
    <property type="chains" value="A=2-158"/>
</dbReference>
<dbReference type="PDB" id="5F6Y">
    <property type="method" value="X-ray"/>
    <property type="resolution" value="1.14 A"/>
    <property type="chains" value="A=2-158"/>
</dbReference>
<dbReference type="PDB" id="5FQ2">
    <property type="method" value="X-ray"/>
    <property type="resolution" value="2.20 A"/>
    <property type="chains" value="A=1-158"/>
</dbReference>
<dbReference type="PDB" id="6SYF">
    <property type="method" value="X-ray"/>
    <property type="resolution" value="1.90 A"/>
    <property type="chains" value="A/B/C/D=2-158"/>
</dbReference>
<dbReference type="PDB" id="8ODR">
    <property type="method" value="X-ray"/>
    <property type="resolution" value="2.85 A"/>
    <property type="chains" value="A=2-158"/>
</dbReference>
<dbReference type="PDB" id="9B62">
    <property type="method" value="EM"/>
    <property type="resolution" value="2.90 A"/>
    <property type="chains" value="C=1-158"/>
</dbReference>
<dbReference type="PDBsum" id="1A3S"/>
<dbReference type="PDBsum" id="1KPS"/>
<dbReference type="PDBsum" id="1Z5S"/>
<dbReference type="PDBsum" id="2GRN"/>
<dbReference type="PDBsum" id="2GRO"/>
<dbReference type="PDBsum" id="2GRP"/>
<dbReference type="PDBsum" id="2GRQ"/>
<dbReference type="PDBsum" id="2GRR"/>
<dbReference type="PDBsum" id="2O25"/>
<dbReference type="PDBsum" id="2PE6"/>
<dbReference type="PDBsum" id="2PX9"/>
<dbReference type="PDBsum" id="2XWU"/>
<dbReference type="PDBsum" id="3A4S"/>
<dbReference type="PDBsum" id="3UIN"/>
<dbReference type="PDBsum" id="3UIO"/>
<dbReference type="PDBsum" id="3UIP"/>
<dbReference type="PDBsum" id="4W5V"/>
<dbReference type="PDBsum" id="4Y1L"/>
<dbReference type="PDBsum" id="5D2M"/>
<dbReference type="PDBsum" id="5F6D"/>
<dbReference type="PDBsum" id="5F6E"/>
<dbReference type="PDBsum" id="5F6U"/>
<dbReference type="PDBsum" id="5F6V"/>
<dbReference type="PDBsum" id="5F6W"/>
<dbReference type="PDBsum" id="5F6X"/>
<dbReference type="PDBsum" id="5F6Y"/>
<dbReference type="PDBsum" id="5FQ2"/>
<dbReference type="PDBsum" id="6SYF"/>
<dbReference type="PDBsum" id="8ODR"/>
<dbReference type="PDBsum" id="9B62"/>
<dbReference type="BMRB" id="P63279"/>
<dbReference type="EMDB" id="EMD-44235"/>
<dbReference type="EMDB" id="EMD-44236"/>
<dbReference type="EMDB" id="EMD-44237"/>
<dbReference type="EMDB" id="EMD-44238"/>
<dbReference type="EMDB" id="EMD-44239"/>
<dbReference type="EMDB" id="EMD-44240"/>
<dbReference type="EMDB" id="EMD-44241"/>
<dbReference type="EMDB" id="EMD-44242"/>
<dbReference type="EMDB" id="EMD-44243"/>
<dbReference type="SMR" id="P63279"/>
<dbReference type="BioGRID" id="113177">
    <property type="interactions" value="699"/>
</dbReference>
<dbReference type="ComplexPortal" id="CPX-4747">
    <property type="entry name" value="E3 ligase (RANBP2) complex"/>
</dbReference>
<dbReference type="CORUM" id="P63279"/>
<dbReference type="DIP" id="DIP-29078N"/>
<dbReference type="ELM" id="P63279"/>
<dbReference type="FunCoup" id="P63279">
    <property type="interactions" value="3751"/>
</dbReference>
<dbReference type="IntAct" id="P63279">
    <property type="interactions" value="230"/>
</dbReference>
<dbReference type="MINT" id="P63279"/>
<dbReference type="STRING" id="9606.ENSP00000348056"/>
<dbReference type="BindingDB" id="P63279"/>
<dbReference type="ChEMBL" id="CHEMBL1741191"/>
<dbReference type="MoonDB" id="P63279">
    <property type="type" value="Predicted"/>
</dbReference>
<dbReference type="TCDB" id="3.A.20.1.1">
    <property type="family name" value="the peroxisomal protein importer (ppi) family"/>
</dbReference>
<dbReference type="GlyGen" id="P63279">
    <property type="glycosylation" value="4 sites, 1 O-linked glycan (1 site)"/>
</dbReference>
<dbReference type="iPTMnet" id="P63279"/>
<dbReference type="PhosphoSitePlus" id="P63279"/>
<dbReference type="SwissPalm" id="P63279"/>
<dbReference type="BioMuta" id="UBE2I"/>
<dbReference type="DMDM" id="54039791"/>
<dbReference type="CPTAC" id="CPTAC-1469"/>
<dbReference type="CPTAC" id="CPTAC-1470"/>
<dbReference type="CPTAC" id="CPTAC-1471"/>
<dbReference type="CPTAC" id="CPTAC-3261"/>
<dbReference type="CPTAC" id="CPTAC-711"/>
<dbReference type="jPOST" id="P63279"/>
<dbReference type="MassIVE" id="P63279"/>
<dbReference type="PaxDb" id="9606-ENSP00000348056"/>
<dbReference type="PeptideAtlas" id="P63279"/>
<dbReference type="ProteomicsDB" id="57517"/>
<dbReference type="Pumba" id="P63279"/>
<dbReference type="TopDownProteomics" id="P63279"/>
<dbReference type="ABCD" id="P63279">
    <property type="antibodies" value="1 sequenced antibody"/>
</dbReference>
<dbReference type="Antibodypedia" id="1138">
    <property type="antibodies" value="524 antibodies from 43 providers"/>
</dbReference>
<dbReference type="CPTC" id="P63279">
    <property type="antibodies" value="1 antibody"/>
</dbReference>
<dbReference type="DNASU" id="7329"/>
<dbReference type="Ensembl" id="ENST00000325437.10">
    <property type="protein sequence ID" value="ENSP00000324897.5"/>
    <property type="gene ID" value="ENSG00000103275.22"/>
</dbReference>
<dbReference type="Ensembl" id="ENST00000355803.9">
    <property type="protein sequence ID" value="ENSP00000348056.4"/>
    <property type="gene ID" value="ENSG00000103275.22"/>
</dbReference>
<dbReference type="Ensembl" id="ENST00000397514.8">
    <property type="protein sequence ID" value="ENSP00000380649.3"/>
    <property type="gene ID" value="ENSG00000103275.22"/>
</dbReference>
<dbReference type="Ensembl" id="ENST00000397515.7">
    <property type="protein sequence ID" value="ENSP00000380650.2"/>
    <property type="gene ID" value="ENSG00000103275.22"/>
</dbReference>
<dbReference type="Ensembl" id="ENST00000403747.7">
    <property type="protein sequence ID" value="ENSP00000385009.2"/>
    <property type="gene ID" value="ENSG00000103275.22"/>
</dbReference>
<dbReference type="Ensembl" id="ENST00000406620.6">
    <property type="protein sequence ID" value="ENSP00000384568.1"/>
    <property type="gene ID" value="ENSG00000103275.22"/>
</dbReference>
<dbReference type="Ensembl" id="ENST00000562470.4">
    <property type="protein sequence ID" value="ENSP00000490882.2"/>
    <property type="gene ID" value="ENSG00000103275.22"/>
</dbReference>
<dbReference type="Ensembl" id="ENST00000566587.6">
    <property type="protein sequence ID" value="ENSP00000457064.1"/>
    <property type="gene ID" value="ENSG00000103275.22"/>
</dbReference>
<dbReference type="Ensembl" id="ENST00000567074.7">
    <property type="protein sequence ID" value="ENSP00000455893.2"/>
    <property type="gene ID" value="ENSG00000103275.22"/>
</dbReference>
<dbReference type="Ensembl" id="ENST00000567383.7">
    <property type="protein sequence ID" value="ENSP00000456188.2"/>
    <property type="gene ID" value="ENSG00000103275.22"/>
</dbReference>
<dbReference type="Ensembl" id="ENST00000711297.1">
    <property type="protein sequence ID" value="ENSP00000518670.1"/>
    <property type="gene ID" value="ENSG00000103275.22"/>
</dbReference>
<dbReference type="Ensembl" id="ENST00000711300.1">
    <property type="protein sequence ID" value="ENSP00000518673.1"/>
    <property type="gene ID" value="ENSG00000103275.22"/>
</dbReference>
<dbReference type="Ensembl" id="ENST00000711306.1">
    <property type="protein sequence ID" value="ENSP00000518678.1"/>
    <property type="gene ID" value="ENSG00000103275.22"/>
</dbReference>
<dbReference type="Ensembl" id="ENST00000711307.1">
    <property type="protein sequence ID" value="ENSP00000518679.1"/>
    <property type="gene ID" value="ENSG00000103275.22"/>
</dbReference>
<dbReference type="Ensembl" id="ENST00000711309.1">
    <property type="protein sequence ID" value="ENSP00000518681.1"/>
    <property type="gene ID" value="ENSG00000103275.22"/>
</dbReference>
<dbReference type="Ensembl" id="ENST00000711310.1">
    <property type="protein sequence ID" value="ENSP00000518682.1"/>
    <property type="gene ID" value="ENSG00000103275.22"/>
</dbReference>
<dbReference type="Ensembl" id="ENST00000711311.1">
    <property type="protein sequence ID" value="ENSP00000518683.1"/>
    <property type="gene ID" value="ENSG00000103275.22"/>
</dbReference>
<dbReference type="Ensembl" id="ENST00000711316.1">
    <property type="protein sequence ID" value="ENSP00000518685.1"/>
    <property type="gene ID" value="ENSG00000103275.22"/>
</dbReference>
<dbReference type="Ensembl" id="ENST00000711317.1">
    <property type="protein sequence ID" value="ENSP00000518686.1"/>
    <property type="gene ID" value="ENSG00000103275.22"/>
</dbReference>
<dbReference type="Ensembl" id="ENST00000711319.1">
    <property type="protein sequence ID" value="ENSP00000518687.1"/>
    <property type="gene ID" value="ENSG00000103275.22"/>
</dbReference>
<dbReference type="Ensembl" id="ENST00000711323.1">
    <property type="protein sequence ID" value="ENSP00000518688.1"/>
    <property type="gene ID" value="ENSG00000103275.22"/>
</dbReference>
<dbReference type="Ensembl" id="ENST00000711330.1">
    <property type="protein sequence ID" value="ENSP00000518694.1"/>
    <property type="gene ID" value="ENSG00000103275.22"/>
</dbReference>
<dbReference type="Ensembl" id="ENST00000711332.1">
    <property type="protein sequence ID" value="ENSP00000518696.1"/>
    <property type="gene ID" value="ENSG00000103275.22"/>
</dbReference>
<dbReference type="Ensembl" id="ENST00000711336.1">
    <property type="protein sequence ID" value="ENSP00000518700.1"/>
    <property type="gene ID" value="ENSG00000103275.22"/>
</dbReference>
<dbReference type="Ensembl" id="ENST00000711343.1">
    <property type="protein sequence ID" value="ENSP00000518706.1"/>
    <property type="gene ID" value="ENSG00000103275.22"/>
</dbReference>
<dbReference type="Ensembl" id="ENST00000711344.1">
    <property type="protein sequence ID" value="ENSP00000518707.1"/>
    <property type="gene ID" value="ENSG00000103275.22"/>
</dbReference>
<dbReference type="Ensembl" id="ENST00000711346.1">
    <property type="protein sequence ID" value="ENSP00000518709.1"/>
    <property type="gene ID" value="ENSG00000103275.22"/>
</dbReference>
<dbReference type="Ensembl" id="ENST00000711348.1">
    <property type="protein sequence ID" value="ENSP00000518711.1"/>
    <property type="gene ID" value="ENSG00000103275.22"/>
</dbReference>
<dbReference type="Ensembl" id="ENST00000711350.1">
    <property type="protein sequence ID" value="ENSP00000518713.1"/>
    <property type="gene ID" value="ENSG00000103275.22"/>
</dbReference>
<dbReference type="Ensembl" id="ENST00000713916.1">
    <property type="protein sequence ID" value="ENSP00000519217.1"/>
    <property type="gene ID" value="ENSG00000103275.22"/>
</dbReference>
<dbReference type="Ensembl" id="ENST00000713920.1">
    <property type="protein sequence ID" value="ENSP00000518663.1"/>
    <property type="gene ID" value="ENSG00000103275.22"/>
</dbReference>
<dbReference type="Ensembl" id="ENST00000713921.1">
    <property type="protein sequence ID" value="ENSP00000518664.1"/>
    <property type="gene ID" value="ENSG00000103275.22"/>
</dbReference>
<dbReference type="GeneID" id="7329"/>
<dbReference type="KEGG" id="hsa:7329"/>
<dbReference type="MANE-Select" id="ENST00000397514.8">
    <property type="protein sequence ID" value="ENSP00000380649.3"/>
    <property type="RefSeq nucleotide sequence ID" value="NM_003345.5"/>
    <property type="RefSeq protein sequence ID" value="NP_003336.1"/>
</dbReference>
<dbReference type="UCSC" id="uc002clc.2">
    <property type="organism name" value="human"/>
</dbReference>
<dbReference type="AGR" id="HGNC:12485"/>
<dbReference type="CTD" id="7329"/>
<dbReference type="DisGeNET" id="7329"/>
<dbReference type="GeneCards" id="UBE2I"/>
<dbReference type="HGNC" id="HGNC:12485">
    <property type="gene designation" value="UBE2I"/>
</dbReference>
<dbReference type="HPA" id="ENSG00000103275">
    <property type="expression patterns" value="Low tissue specificity"/>
</dbReference>
<dbReference type="MIM" id="601661">
    <property type="type" value="gene"/>
</dbReference>
<dbReference type="neXtProt" id="NX_P63279"/>
<dbReference type="OpenTargets" id="ENSG00000103275"/>
<dbReference type="PharmGKB" id="PA37134"/>
<dbReference type="VEuPathDB" id="HostDB:ENSG00000103275"/>
<dbReference type="eggNOG" id="KOG0424">
    <property type="taxonomic scope" value="Eukaryota"/>
</dbReference>
<dbReference type="GeneTree" id="ENSGT00550000075088"/>
<dbReference type="InParanoid" id="P63279"/>
<dbReference type="OMA" id="TWECGIP"/>
<dbReference type="OrthoDB" id="6600758at2759"/>
<dbReference type="PAN-GO" id="P63279">
    <property type="GO annotations" value="3 GO annotations based on evolutionary models"/>
</dbReference>
<dbReference type="PhylomeDB" id="P63279"/>
<dbReference type="TreeFam" id="TF101122"/>
<dbReference type="BRENDA" id="2.3.2.23">
    <property type="organism ID" value="2681"/>
</dbReference>
<dbReference type="PathwayCommons" id="P63279"/>
<dbReference type="Reactome" id="R-HSA-1221632">
    <property type="pathway name" value="Meiotic synapsis"/>
</dbReference>
<dbReference type="Reactome" id="R-HSA-196791">
    <property type="pathway name" value="Vitamin D (calciferol) metabolism"/>
</dbReference>
<dbReference type="Reactome" id="R-HSA-3065678">
    <property type="pathway name" value="SUMO is transferred from E1 to E2 (UBE2I, UBC9)"/>
</dbReference>
<dbReference type="Reactome" id="R-HSA-3108214">
    <property type="pathway name" value="SUMOylation of DNA damage response and repair proteins"/>
</dbReference>
<dbReference type="Reactome" id="R-HSA-3232118">
    <property type="pathway name" value="SUMOylation of transcription factors"/>
</dbReference>
<dbReference type="Reactome" id="R-HSA-3232142">
    <property type="pathway name" value="SUMOylation of ubiquitinylation proteins"/>
</dbReference>
<dbReference type="Reactome" id="R-HSA-3899300">
    <property type="pathway name" value="SUMOylation of transcription cofactors"/>
</dbReference>
<dbReference type="Reactome" id="R-HSA-4085377">
    <property type="pathway name" value="SUMOylation of SUMOylation proteins"/>
</dbReference>
<dbReference type="Reactome" id="R-HSA-4090294">
    <property type="pathway name" value="SUMOylation of intracellular receptors"/>
</dbReference>
<dbReference type="Reactome" id="R-HSA-4551638">
    <property type="pathway name" value="SUMOylation of chromatin organization proteins"/>
</dbReference>
<dbReference type="Reactome" id="R-HSA-4570464">
    <property type="pathway name" value="SUMOylation of RNA binding proteins"/>
</dbReference>
<dbReference type="Reactome" id="R-HSA-4615885">
    <property type="pathway name" value="SUMOylation of DNA replication proteins"/>
</dbReference>
<dbReference type="Reactome" id="R-HSA-4655427">
    <property type="pathway name" value="SUMOylation of DNA methylation proteins"/>
</dbReference>
<dbReference type="Reactome" id="R-HSA-4755510">
    <property type="pathway name" value="SUMOylation of immune response proteins"/>
</dbReference>
<dbReference type="Reactome" id="R-HSA-5693565">
    <property type="pathway name" value="Recruitment and ATM-mediated phosphorylation of repair and signaling proteins at DNA double strand breaks"/>
</dbReference>
<dbReference type="Reactome" id="R-HSA-5693607">
    <property type="pathway name" value="Processing of DNA double-strand break ends"/>
</dbReference>
<dbReference type="Reactome" id="R-HSA-5696395">
    <property type="pathway name" value="Formation of Incision Complex in GG-NER"/>
</dbReference>
<dbReference type="Reactome" id="R-HSA-8866904">
    <property type="pathway name" value="Negative regulation of activity of TFAP2 (AP-2) family transcription factors"/>
</dbReference>
<dbReference type="Reactome" id="R-HSA-9615933">
    <property type="pathway name" value="Postmitotic nuclear pore complex (NPC) reformation"/>
</dbReference>
<dbReference type="Reactome" id="R-HSA-9683610">
    <property type="pathway name" value="Maturation of nucleoprotein"/>
</dbReference>
<dbReference type="Reactome" id="R-HSA-9694631">
    <property type="pathway name" value="Maturation of nucleoprotein"/>
</dbReference>
<dbReference type="Reactome" id="R-HSA-9735871">
    <property type="pathway name" value="SARS-CoV-1 targets host intracellular signalling and regulatory pathways"/>
</dbReference>
<dbReference type="Reactome" id="R-HSA-9793242">
    <property type="pathway name" value="SUMOylation of nuclear envelope proteins"/>
</dbReference>
<dbReference type="Reactome" id="R-HSA-9833482">
    <property type="pathway name" value="PKR-mediated signaling"/>
</dbReference>
<dbReference type="Reactome" id="R-HSA-9843940">
    <property type="pathway name" value="Regulation of endogenous retroelements by KRAB-ZFP proteins"/>
</dbReference>
<dbReference type="Reactome" id="R-HSA-9856649">
    <property type="pathway name" value="Transcriptional and post-translational regulation of MITF-M expression and activity"/>
</dbReference>
<dbReference type="SignaLink" id="P63279"/>
<dbReference type="SIGNOR" id="P63279"/>
<dbReference type="UniPathway" id="UPA00886"/>
<dbReference type="BioGRID-ORCS" id="7329">
    <property type="hits" value="846 hits in 1188 CRISPR screens"/>
</dbReference>
<dbReference type="CD-CODE" id="91857CE7">
    <property type="entry name" value="Nucleolus"/>
</dbReference>
<dbReference type="CD-CODE" id="B5B9A610">
    <property type="entry name" value="PML body"/>
</dbReference>
<dbReference type="CD-CODE" id="DEE660B4">
    <property type="entry name" value="Stress granule"/>
</dbReference>
<dbReference type="ChiTaRS" id="UBE2I">
    <property type="organism name" value="human"/>
</dbReference>
<dbReference type="EvolutionaryTrace" id="P63279"/>
<dbReference type="GeneWiki" id="UBE2I"/>
<dbReference type="GenomeRNAi" id="7329"/>
<dbReference type="Pharos" id="P63279">
    <property type="development level" value="Tbio"/>
</dbReference>
<dbReference type="PRO" id="PR:P63279"/>
<dbReference type="Proteomes" id="UP000005640">
    <property type="component" value="Chromosome 16"/>
</dbReference>
<dbReference type="RNAct" id="P63279">
    <property type="molecule type" value="protein"/>
</dbReference>
<dbReference type="Bgee" id="ENSG00000103275">
    <property type="expression patterns" value="Expressed in oocyte and 210 other cell types or tissues"/>
</dbReference>
<dbReference type="ExpressionAtlas" id="P63279">
    <property type="expression patterns" value="baseline and differential"/>
</dbReference>
<dbReference type="GO" id="GO:0005737">
    <property type="term" value="C:cytoplasm"/>
    <property type="evidence" value="ECO:0000314"/>
    <property type="project" value="MGI"/>
</dbReference>
<dbReference type="GO" id="GO:0005829">
    <property type="term" value="C:cytosol"/>
    <property type="evidence" value="ECO:0000304"/>
    <property type="project" value="Reactome"/>
</dbReference>
<dbReference type="GO" id="GO:0098978">
    <property type="term" value="C:glutamatergic synapse"/>
    <property type="evidence" value="ECO:0007669"/>
    <property type="project" value="Ensembl"/>
</dbReference>
<dbReference type="GO" id="GO:0005635">
    <property type="term" value="C:nuclear envelope"/>
    <property type="evidence" value="ECO:0000304"/>
    <property type="project" value="Reactome"/>
</dbReference>
<dbReference type="GO" id="GO:0005643">
    <property type="term" value="C:nuclear pore"/>
    <property type="evidence" value="ECO:0000303"/>
    <property type="project" value="ComplexPortal"/>
</dbReference>
<dbReference type="GO" id="GO:0005654">
    <property type="term" value="C:nucleoplasm"/>
    <property type="evidence" value="ECO:0000304"/>
    <property type="project" value="Reactome"/>
</dbReference>
<dbReference type="GO" id="GO:0005634">
    <property type="term" value="C:nucleus"/>
    <property type="evidence" value="ECO:0000314"/>
    <property type="project" value="UniProtKB"/>
</dbReference>
<dbReference type="GO" id="GO:0048471">
    <property type="term" value="C:perinuclear region of cytoplasm"/>
    <property type="evidence" value="ECO:0007669"/>
    <property type="project" value="UniProtKB-SubCell"/>
</dbReference>
<dbReference type="GO" id="GO:0016605">
    <property type="term" value="C:PML body"/>
    <property type="evidence" value="ECO:0000314"/>
    <property type="project" value="UniProtKB"/>
</dbReference>
<dbReference type="GO" id="GO:0099524">
    <property type="term" value="C:postsynaptic cytosol"/>
    <property type="evidence" value="ECO:0007669"/>
    <property type="project" value="Ensembl"/>
</dbReference>
<dbReference type="GO" id="GO:0099523">
    <property type="term" value="C:presynaptic cytosol"/>
    <property type="evidence" value="ECO:0007669"/>
    <property type="project" value="Ensembl"/>
</dbReference>
<dbReference type="GO" id="GO:0098685">
    <property type="term" value="C:Schaffer collateral - CA1 synapse"/>
    <property type="evidence" value="ECO:0007669"/>
    <property type="project" value="Ensembl"/>
</dbReference>
<dbReference type="GO" id="GO:0106068">
    <property type="term" value="C:SUMO ligase complex"/>
    <property type="evidence" value="ECO:0000353"/>
    <property type="project" value="ComplexPortal"/>
</dbReference>
<dbReference type="GO" id="GO:0000795">
    <property type="term" value="C:synaptonemal complex"/>
    <property type="evidence" value="ECO:0000304"/>
    <property type="project" value="ProtInc"/>
</dbReference>
<dbReference type="GO" id="GO:1990234">
    <property type="term" value="C:transferase complex"/>
    <property type="evidence" value="ECO:0000314"/>
    <property type="project" value="BHF-UCL"/>
</dbReference>
<dbReference type="GO" id="GO:0005524">
    <property type="term" value="F:ATP binding"/>
    <property type="evidence" value="ECO:0007669"/>
    <property type="project" value="UniProtKB-KW"/>
</dbReference>
<dbReference type="GO" id="GO:0019899">
    <property type="term" value="F:enzyme binding"/>
    <property type="evidence" value="ECO:0000353"/>
    <property type="project" value="UniProtKB"/>
</dbReference>
<dbReference type="GO" id="GO:0043398">
    <property type="term" value="F:HLH domain binding"/>
    <property type="evidence" value="ECO:0007669"/>
    <property type="project" value="Ensembl"/>
</dbReference>
<dbReference type="GO" id="GO:0071535">
    <property type="term" value="F:RING-like zinc finger domain binding"/>
    <property type="evidence" value="ECO:0000353"/>
    <property type="project" value="UniProtKB"/>
</dbReference>
<dbReference type="GO" id="GO:0003723">
    <property type="term" value="F:RNA binding"/>
    <property type="evidence" value="ECO:0007005"/>
    <property type="project" value="UniProtKB"/>
</dbReference>
<dbReference type="GO" id="GO:0044388">
    <property type="term" value="F:small protein activating enzyme binding"/>
    <property type="evidence" value="ECO:0000353"/>
    <property type="project" value="CAFA"/>
</dbReference>
<dbReference type="GO" id="GO:0061656">
    <property type="term" value="F:SUMO conjugating enzyme activity"/>
    <property type="evidence" value="ECO:0000314"/>
    <property type="project" value="BHF-UCL"/>
</dbReference>
<dbReference type="GO" id="GO:0019789">
    <property type="term" value="F:SUMO transferase activity"/>
    <property type="evidence" value="ECO:0000269"/>
    <property type="project" value="Reactome"/>
</dbReference>
<dbReference type="GO" id="GO:0001221">
    <property type="term" value="F:transcription coregulator binding"/>
    <property type="evidence" value="ECO:0000353"/>
    <property type="project" value="ARUK-UCL"/>
</dbReference>
<dbReference type="GO" id="GO:0008134">
    <property type="term" value="F:transcription factor binding"/>
    <property type="evidence" value="ECO:0000353"/>
    <property type="project" value="UniProtKB"/>
</dbReference>
<dbReference type="GO" id="GO:0051301">
    <property type="term" value="P:cell division"/>
    <property type="evidence" value="ECO:0007669"/>
    <property type="project" value="UniProtKB-KW"/>
</dbReference>
<dbReference type="GO" id="GO:0007059">
    <property type="term" value="P:chromosome segregation"/>
    <property type="evidence" value="ECO:0007669"/>
    <property type="project" value="UniProtKB-KW"/>
</dbReference>
<dbReference type="GO" id="GO:0007084">
    <property type="term" value="P:mitotic nuclear membrane reassembly"/>
    <property type="evidence" value="ECO:0000304"/>
    <property type="project" value="Reactome"/>
</dbReference>
<dbReference type="GO" id="GO:0050804">
    <property type="term" value="P:modulation of chemical synaptic transmission"/>
    <property type="evidence" value="ECO:0007669"/>
    <property type="project" value="Ensembl"/>
</dbReference>
<dbReference type="GO" id="GO:0045892">
    <property type="term" value="P:negative regulation of DNA-templated transcription"/>
    <property type="evidence" value="ECO:0000314"/>
    <property type="project" value="BHF-UCL"/>
</dbReference>
<dbReference type="GO" id="GO:0000122">
    <property type="term" value="P:negative regulation of transcription by RNA polymerase II"/>
    <property type="evidence" value="ECO:0000315"/>
    <property type="project" value="BHF-UCL"/>
</dbReference>
<dbReference type="GO" id="GO:0051168">
    <property type="term" value="P:nuclear export"/>
    <property type="evidence" value="ECO:0000269"/>
    <property type="project" value="ComplexPortal"/>
</dbReference>
<dbReference type="GO" id="GO:0043123">
    <property type="term" value="P:positive regulation of canonical NF-kappaB signal transduction"/>
    <property type="evidence" value="ECO:0007669"/>
    <property type="project" value="Ensembl"/>
</dbReference>
<dbReference type="GO" id="GO:0030335">
    <property type="term" value="P:positive regulation of cell migration"/>
    <property type="evidence" value="ECO:0000315"/>
    <property type="project" value="BHF-UCL"/>
</dbReference>
<dbReference type="GO" id="GO:0036211">
    <property type="term" value="P:protein modification process"/>
    <property type="evidence" value="ECO:0000304"/>
    <property type="project" value="ProtInc"/>
</dbReference>
<dbReference type="GO" id="GO:0016925">
    <property type="term" value="P:protein sumoylation"/>
    <property type="evidence" value="ECO:0000314"/>
    <property type="project" value="UniProtKB"/>
</dbReference>
<dbReference type="GO" id="GO:0006511">
    <property type="term" value="P:ubiquitin-dependent protein catabolic process"/>
    <property type="evidence" value="ECO:0000304"/>
    <property type="project" value="ProtInc"/>
</dbReference>
<dbReference type="CDD" id="cd23798">
    <property type="entry name" value="UBCc_UBE2I"/>
    <property type="match status" value="1"/>
</dbReference>
<dbReference type="FunFam" id="3.10.110.10:FF:000013">
    <property type="entry name" value="SUMO-conjugating enzyme UBC9"/>
    <property type="match status" value="1"/>
</dbReference>
<dbReference type="Gene3D" id="3.10.110.10">
    <property type="entry name" value="Ubiquitin Conjugating Enzyme"/>
    <property type="match status" value="1"/>
</dbReference>
<dbReference type="InterPro" id="IPR050113">
    <property type="entry name" value="Ub_conjugating_enzyme"/>
</dbReference>
<dbReference type="InterPro" id="IPR000608">
    <property type="entry name" value="UBQ-conjugat_E2_core"/>
</dbReference>
<dbReference type="InterPro" id="IPR023313">
    <property type="entry name" value="UBQ-conjugating_AS"/>
</dbReference>
<dbReference type="InterPro" id="IPR016135">
    <property type="entry name" value="UBQ-conjugating_enzyme/RWD"/>
</dbReference>
<dbReference type="PANTHER" id="PTHR24067">
    <property type="entry name" value="UBIQUITIN-CONJUGATING ENZYME E2"/>
    <property type="match status" value="1"/>
</dbReference>
<dbReference type="Pfam" id="PF00179">
    <property type="entry name" value="UQ_con"/>
    <property type="match status" value="1"/>
</dbReference>
<dbReference type="SMART" id="SM00212">
    <property type="entry name" value="UBCc"/>
    <property type="match status" value="1"/>
</dbReference>
<dbReference type="SUPFAM" id="SSF54495">
    <property type="entry name" value="UBC-like"/>
    <property type="match status" value="1"/>
</dbReference>
<dbReference type="PROSITE" id="PS00183">
    <property type="entry name" value="UBC_1"/>
    <property type="match status" value="1"/>
</dbReference>
<dbReference type="PROSITE" id="PS50127">
    <property type="entry name" value="UBC_2"/>
    <property type="match status" value="1"/>
</dbReference>
<evidence type="ECO:0000250" key="1">
    <source>
        <dbReference type="UniProtKB" id="P63280"/>
    </source>
</evidence>
<evidence type="ECO:0000250" key="2">
    <source>
        <dbReference type="UniProtKB" id="P63281"/>
    </source>
</evidence>
<evidence type="ECO:0000255" key="3">
    <source>
        <dbReference type="PROSITE-ProRule" id="PRU00388"/>
    </source>
</evidence>
<evidence type="ECO:0000269" key="4">
    <source>
    </source>
</evidence>
<evidence type="ECO:0000269" key="5">
    <source>
    </source>
</evidence>
<evidence type="ECO:0000269" key="6">
    <source>
    </source>
</evidence>
<evidence type="ECO:0000269" key="7">
    <source>
    </source>
</evidence>
<evidence type="ECO:0000269" key="8">
    <source>
    </source>
</evidence>
<evidence type="ECO:0000269" key="9">
    <source>
    </source>
</evidence>
<evidence type="ECO:0000269" key="10">
    <source>
    </source>
</evidence>
<evidence type="ECO:0000269" key="11">
    <source>
    </source>
</evidence>
<evidence type="ECO:0000269" key="12">
    <source>
    </source>
</evidence>
<evidence type="ECO:0000269" key="13">
    <source>
    </source>
</evidence>
<evidence type="ECO:0000269" key="14">
    <source>
    </source>
</evidence>
<evidence type="ECO:0000269" key="15">
    <source>
    </source>
</evidence>
<evidence type="ECO:0000269" key="16">
    <source>
    </source>
</evidence>
<evidence type="ECO:0000269" key="17">
    <source>
    </source>
</evidence>
<evidence type="ECO:0000269" key="18">
    <source>
    </source>
</evidence>
<evidence type="ECO:0000269" key="19">
    <source>
    </source>
</evidence>
<evidence type="ECO:0000269" key="20">
    <source>
    </source>
</evidence>
<evidence type="ECO:0000269" key="21">
    <source>
    </source>
</evidence>
<evidence type="ECO:0000269" key="22">
    <source>
    </source>
</evidence>
<evidence type="ECO:0000269" key="23">
    <source>
    </source>
</evidence>
<evidence type="ECO:0000269" key="24">
    <source>
    </source>
</evidence>
<evidence type="ECO:0000269" key="25">
    <source>
    </source>
</evidence>
<evidence type="ECO:0000269" key="26">
    <source>
    </source>
</evidence>
<evidence type="ECO:0000269" key="27">
    <source>
    </source>
</evidence>
<evidence type="ECO:0000269" key="28">
    <source>
    </source>
</evidence>
<evidence type="ECO:0000269" key="29">
    <source>
    </source>
</evidence>
<evidence type="ECO:0000269" key="30">
    <source>
    </source>
</evidence>
<evidence type="ECO:0000269" key="31">
    <source>
    </source>
</evidence>
<evidence type="ECO:0000269" key="32">
    <source>
    </source>
</evidence>
<evidence type="ECO:0000269" key="33">
    <source>
    </source>
</evidence>
<evidence type="ECO:0000269" key="34">
    <source>
    </source>
</evidence>
<evidence type="ECO:0000269" key="35">
    <source>
    </source>
</evidence>
<evidence type="ECO:0000269" key="36">
    <source>
    </source>
</evidence>
<evidence type="ECO:0000269" key="37">
    <source>
    </source>
</evidence>
<evidence type="ECO:0000269" key="38">
    <source>
    </source>
</evidence>
<evidence type="ECO:0000269" key="39">
    <source>
    </source>
</evidence>
<evidence type="ECO:0000269" key="40">
    <source>
    </source>
</evidence>
<evidence type="ECO:0000269" key="41">
    <source>
    </source>
</evidence>
<evidence type="ECO:0000269" key="42">
    <source>
    </source>
</evidence>
<evidence type="ECO:0000269" key="43">
    <source>
    </source>
</evidence>
<evidence type="ECO:0000269" key="44">
    <source>
    </source>
</evidence>
<evidence type="ECO:0000269" key="45">
    <source>
    </source>
</evidence>
<evidence type="ECO:0000269" key="46">
    <source>
    </source>
</evidence>
<evidence type="ECO:0000269" key="47">
    <source>
    </source>
</evidence>
<evidence type="ECO:0000269" key="48">
    <source>
    </source>
</evidence>
<evidence type="ECO:0000305" key="49"/>
<evidence type="ECO:0007744" key="50">
    <source>
    </source>
</evidence>
<evidence type="ECO:0007744" key="51">
    <source>
    </source>
</evidence>
<evidence type="ECO:0007744" key="52">
    <source>
    </source>
</evidence>
<evidence type="ECO:0007744" key="53">
    <source>
    </source>
</evidence>
<evidence type="ECO:0007744" key="54">
    <source>
    </source>
</evidence>
<evidence type="ECO:0007744" key="55">
    <source>
    </source>
</evidence>
<evidence type="ECO:0007744" key="56">
    <source>
    </source>
</evidence>
<evidence type="ECO:0007744" key="57">
    <source>
    </source>
</evidence>
<evidence type="ECO:0007744" key="58">
    <source>
    </source>
</evidence>
<evidence type="ECO:0007829" key="59">
    <source>
        <dbReference type="PDB" id="2PE6"/>
    </source>
</evidence>
<evidence type="ECO:0007829" key="60">
    <source>
        <dbReference type="PDB" id="5F6E"/>
    </source>
</evidence>
<reference key="1">
    <citation type="journal article" date="1996" name="Nucleic Acids Res.">
        <title>Identification of the structural and functional human homolog of the yeast ubiquitin conjugating enzyme UBC9.</title>
        <authorList>
            <person name="Yasugi T."/>
            <person name="Howley P.M."/>
        </authorList>
    </citation>
    <scope>NUCLEOTIDE SEQUENCE [MRNA]</scope>
    <scope>FUNCTION</scope>
</reference>
<reference key="2">
    <citation type="journal article" date="1996" name="Cytogenet. Cell Genet.">
        <title>Assignment of the gene for a ubiquitin-conjugating enzyme (UBE2I) to human chromosome band 16p13.3 by in situ hybridization.</title>
        <authorList>
            <person name="Tachibana M."/>
            <person name="Iwata N."/>
            <person name="Watanabe A."/>
            <person name="Nobukuni Y."/>
            <person name="Ploplis B."/>
            <person name="Kajigaya S."/>
        </authorList>
    </citation>
    <scope>NUCLEOTIDE SEQUENCE [MRNA]</scope>
</reference>
<reference key="3">
    <citation type="journal article" date="1996" name="Cytogenet. Cell Genet.">
        <title>Cloning, expression, and mapping of UBE2I, a novel gene encoding a human homologue of yeast ubiquitin-conjugating enzymes which are critical for regulating the cell cycle.</title>
        <authorList>
            <person name="Watanabe T.K."/>
            <person name="Fujiwara T."/>
            <person name="Kawai A."/>
            <person name="Shimizu F."/>
            <person name="Takami S."/>
            <person name="Hirano H."/>
            <person name="Okuno S."/>
            <person name="Ozaki K."/>
            <person name="Takeda S."/>
            <person name="Shimada Y."/>
            <person name="Nagata M."/>
            <person name="Takaichi A."/>
            <person name="Takahashi E."/>
            <person name="Nakamura Y."/>
            <person name="Shin S."/>
        </authorList>
    </citation>
    <scope>NUCLEOTIDE SEQUENCE [MRNA]</scope>
    <source>
        <tissue>Fetal brain</tissue>
    </source>
</reference>
<reference key="4">
    <citation type="journal article" date="1997" name="Gene">
        <title>Poly(ADP-ribose) polymerase interacts with a novel human ubiquitin conjugating enzyme: hUbc9.</title>
        <authorList>
            <person name="Masson M."/>
            <person name="Menissier-de Murcia J."/>
            <person name="Mattei M.-G."/>
            <person name="de Murcia G.M."/>
            <person name="Niedergang C.P."/>
        </authorList>
    </citation>
    <scope>NUCLEOTIDE SEQUENCE [MRNA]</scope>
    <scope>INTERACTION WITH PARP</scope>
</reference>
<reference key="5">
    <citation type="journal article" date="1996" name="Proc. Natl. Acad. Sci. U.S.A.">
        <title>Mammalian ubiquitin-conjugating enzyme Ubc9 interacts with Rad51 recombination protein and localizes in synaptonemal complexes.</title>
        <authorList>
            <person name="Kovalenko O.V."/>
            <person name="Plug A.W."/>
            <person name="Haaf T."/>
            <person name="Gonda D.K."/>
            <person name="Ashley T."/>
            <person name="Ward D.C."/>
            <person name="Radding C.M."/>
            <person name="Golub E.I."/>
        </authorList>
    </citation>
    <scope>NUCLEOTIDE SEQUENCE [MRNA]</scope>
    <scope>SUBCELLULAR LOCATION</scope>
    <scope>TISSUE SPECIFICITY</scope>
</reference>
<reference key="6">
    <citation type="journal article" date="1996" name="Mol. Gen. Genet.">
        <title>Two-hybrid interaction of a human UBC9 homolog with centromere proteins of Saccharomyces cerevisiae.</title>
        <authorList>
            <person name="Jiang W."/>
            <person name="Koltin Y."/>
        </authorList>
    </citation>
    <scope>NUCLEOTIDE SEQUENCE [MRNA]</scope>
</reference>
<reference key="7">
    <citation type="journal article" date="1996" name="J. Biol. Chem.">
        <title>Molecular cloning of the cDNA and chromosome localization of the gene for human ubiquitin-conjugating enzyme 9.</title>
        <authorList>
            <person name="Wang Z.-Y."/>
            <person name="Qiu Q."/>
            <person name="Seufert W."/>
            <person name="Taguchi T."/>
            <person name="Testa J.R."/>
            <person name="Whitmore S.A."/>
            <person name="Callen D.F."/>
            <person name="Welsh D."/>
            <person name="Shenk T."/>
            <person name="Deuel T.F."/>
        </authorList>
    </citation>
    <scope>NUCLEOTIDE SEQUENCE [MRNA]</scope>
    <source>
        <tissue>Placenta</tissue>
    </source>
</reference>
<reference key="8">
    <citation type="submission" date="1995-10" db="EMBL/GenBank/DDBJ databases">
        <authorList>
            <person name="Shen Z."/>
        </authorList>
    </citation>
    <scope>NUCLEOTIDE SEQUENCE [MRNA]</scope>
</reference>
<reference key="9">
    <citation type="journal article" date="1997" name="Oncogene">
        <title>Modulation of ETS-1 transcriptional activity by huUBC9, a ubiquitin-conjugating enzyme.</title>
        <authorList>
            <person name="Hahn S.L."/>
            <person name="Criqui-Filipe P."/>
            <person name="Wasylyk B."/>
        </authorList>
    </citation>
    <scope>NUCLEOTIDE SEQUENCE [MRNA]</scope>
    <scope>INTERACTION WITH ETS1</scope>
</reference>
<reference key="10">
    <citation type="submission" date="2004-10" db="EMBL/GenBank/DDBJ databases">
        <title>Cloning of human full-length CDSs in BD Creator(TM) system donor vector.</title>
        <authorList>
            <person name="Kalnine N."/>
            <person name="Chen X."/>
            <person name="Rolfs A."/>
            <person name="Halleck A."/>
            <person name="Hines L."/>
            <person name="Eisenstein S."/>
            <person name="Koundinya M."/>
            <person name="Raphael J."/>
            <person name="Moreira D."/>
            <person name="Kelley T."/>
            <person name="LaBaer J."/>
            <person name="Lin Y."/>
            <person name="Phelan M."/>
            <person name="Farmer A."/>
        </authorList>
    </citation>
    <scope>NUCLEOTIDE SEQUENCE [LARGE SCALE MRNA]</scope>
</reference>
<reference key="11">
    <citation type="submission" date="2005-03" db="EMBL/GenBank/DDBJ databases">
        <authorList>
            <person name="Totoki Y."/>
            <person name="Toyoda A."/>
            <person name="Takeda T."/>
            <person name="Sakaki Y."/>
            <person name="Tanaka A."/>
            <person name="Yokoyama S."/>
            <person name="Ohara O."/>
            <person name="Nagase T."/>
            <person name="Kikuno R.F."/>
        </authorList>
    </citation>
    <scope>NUCLEOTIDE SEQUENCE [LARGE SCALE MRNA]</scope>
    <source>
        <tissue>Brain</tissue>
    </source>
</reference>
<reference key="12">
    <citation type="journal article" date="2001" name="Hum. Mol. Genet.">
        <title>Sequence, structure and pathology of the fully annotated terminal 2 Mb of the short arm of human chromosome 16.</title>
        <authorList>
            <person name="Daniels R.J."/>
            <person name="Peden J.F."/>
            <person name="Lloyd C."/>
            <person name="Horsley S.W."/>
            <person name="Clark K."/>
            <person name="Tufarelli C."/>
            <person name="Kearney L."/>
            <person name="Buckle V.J."/>
            <person name="Doggett N.A."/>
            <person name="Flint J."/>
            <person name="Higgs D.R."/>
        </authorList>
    </citation>
    <scope>NUCLEOTIDE SEQUENCE [LARGE SCALE GENOMIC DNA]</scope>
</reference>
<reference key="13">
    <citation type="submission" date="2005-09" db="EMBL/GenBank/DDBJ databases">
        <authorList>
            <person name="Mural R.J."/>
            <person name="Istrail S."/>
            <person name="Sutton G.G."/>
            <person name="Florea L."/>
            <person name="Halpern A.L."/>
            <person name="Mobarry C.M."/>
            <person name="Lippert R."/>
            <person name="Walenz B."/>
            <person name="Shatkay H."/>
            <person name="Dew I."/>
            <person name="Miller J.R."/>
            <person name="Flanigan M.J."/>
            <person name="Edwards N.J."/>
            <person name="Bolanos R."/>
            <person name="Fasulo D."/>
            <person name="Halldorsson B.V."/>
            <person name="Hannenhalli S."/>
            <person name="Turner R."/>
            <person name="Yooseph S."/>
            <person name="Lu F."/>
            <person name="Nusskern D.R."/>
            <person name="Shue B.C."/>
            <person name="Zheng X.H."/>
            <person name="Zhong F."/>
            <person name="Delcher A.L."/>
            <person name="Huson D.H."/>
            <person name="Kravitz S.A."/>
            <person name="Mouchard L."/>
            <person name="Reinert K."/>
            <person name="Remington K.A."/>
            <person name="Clark A.G."/>
            <person name="Waterman M.S."/>
            <person name="Eichler E.E."/>
            <person name="Adams M.D."/>
            <person name="Hunkapiller M.W."/>
            <person name="Myers E.W."/>
            <person name="Venter J.C."/>
        </authorList>
    </citation>
    <scope>NUCLEOTIDE SEQUENCE [LARGE SCALE GENOMIC DNA]</scope>
</reference>
<reference key="14">
    <citation type="journal article" date="2004" name="Nature">
        <title>The sequence and analysis of duplication-rich human chromosome 16.</title>
        <authorList>
            <person name="Martin J."/>
            <person name="Han C."/>
            <person name="Gordon L.A."/>
            <person name="Terry A."/>
            <person name="Prabhakar S."/>
            <person name="She X."/>
            <person name="Xie G."/>
            <person name="Hellsten U."/>
            <person name="Chan Y.M."/>
            <person name="Altherr M."/>
            <person name="Couronne O."/>
            <person name="Aerts A."/>
            <person name="Bajorek E."/>
            <person name="Black S."/>
            <person name="Blumer H."/>
            <person name="Branscomb E."/>
            <person name="Brown N.C."/>
            <person name="Bruno W.J."/>
            <person name="Buckingham J.M."/>
            <person name="Callen D.F."/>
            <person name="Campbell C.S."/>
            <person name="Campbell M.L."/>
            <person name="Campbell E.W."/>
            <person name="Caoile C."/>
            <person name="Challacombe J.F."/>
            <person name="Chasteen L.A."/>
            <person name="Chertkov O."/>
            <person name="Chi H.C."/>
            <person name="Christensen M."/>
            <person name="Clark L.M."/>
            <person name="Cohn J.D."/>
            <person name="Denys M."/>
            <person name="Detter J.C."/>
            <person name="Dickson M."/>
            <person name="Dimitrijevic-Bussod M."/>
            <person name="Escobar J."/>
            <person name="Fawcett J.J."/>
            <person name="Flowers D."/>
            <person name="Fotopulos D."/>
            <person name="Glavina T."/>
            <person name="Gomez M."/>
            <person name="Gonzales E."/>
            <person name="Goodstein D."/>
            <person name="Goodwin L.A."/>
            <person name="Grady D.L."/>
            <person name="Grigoriev I."/>
            <person name="Groza M."/>
            <person name="Hammon N."/>
            <person name="Hawkins T."/>
            <person name="Haydu L."/>
            <person name="Hildebrand C.E."/>
            <person name="Huang W."/>
            <person name="Israni S."/>
            <person name="Jett J."/>
            <person name="Jewett P.B."/>
            <person name="Kadner K."/>
            <person name="Kimball H."/>
            <person name="Kobayashi A."/>
            <person name="Krawczyk M.-C."/>
            <person name="Leyba T."/>
            <person name="Longmire J.L."/>
            <person name="Lopez F."/>
            <person name="Lou Y."/>
            <person name="Lowry S."/>
            <person name="Ludeman T."/>
            <person name="Manohar C.F."/>
            <person name="Mark G.A."/>
            <person name="McMurray K.L."/>
            <person name="Meincke L.J."/>
            <person name="Morgan J."/>
            <person name="Moyzis R.K."/>
            <person name="Mundt M.O."/>
            <person name="Munk A.C."/>
            <person name="Nandkeshwar R.D."/>
            <person name="Pitluck S."/>
            <person name="Pollard M."/>
            <person name="Predki P."/>
            <person name="Parson-Quintana B."/>
            <person name="Ramirez L."/>
            <person name="Rash S."/>
            <person name="Retterer J."/>
            <person name="Ricke D.O."/>
            <person name="Robinson D.L."/>
            <person name="Rodriguez A."/>
            <person name="Salamov A."/>
            <person name="Saunders E.H."/>
            <person name="Scott D."/>
            <person name="Shough T."/>
            <person name="Stallings R.L."/>
            <person name="Stalvey M."/>
            <person name="Sutherland R.D."/>
            <person name="Tapia R."/>
            <person name="Tesmer J.G."/>
            <person name="Thayer N."/>
            <person name="Thompson L.S."/>
            <person name="Tice H."/>
            <person name="Torney D.C."/>
            <person name="Tran-Gyamfi M."/>
            <person name="Tsai M."/>
            <person name="Ulanovsky L.E."/>
            <person name="Ustaszewska A."/>
            <person name="Vo N."/>
            <person name="White P.S."/>
            <person name="Williams A.L."/>
            <person name="Wills P.L."/>
            <person name="Wu J.-R."/>
            <person name="Wu K."/>
            <person name="Yang J."/>
            <person name="DeJong P."/>
            <person name="Bruce D."/>
            <person name="Doggett N.A."/>
            <person name="Deaven L."/>
            <person name="Schmutz J."/>
            <person name="Grimwood J."/>
            <person name="Richardson P."/>
            <person name="Rokhsar D.S."/>
            <person name="Eichler E.E."/>
            <person name="Gilna P."/>
            <person name="Lucas S.M."/>
            <person name="Myers R.M."/>
            <person name="Rubin E.M."/>
            <person name="Pennacchio L.A."/>
        </authorList>
    </citation>
    <scope>NUCLEOTIDE SEQUENCE [LARGE SCALE GENOMIC DNA]</scope>
</reference>
<reference key="15">
    <citation type="journal article" date="2004" name="Genome Res.">
        <title>The status, quality, and expansion of the NIH full-length cDNA project: the Mammalian Gene Collection (MGC).</title>
        <authorList>
            <consortium name="The MGC Project Team"/>
        </authorList>
    </citation>
    <scope>NUCLEOTIDE SEQUENCE [LARGE SCALE MRNA]</scope>
    <source>
        <tissue>Lung</tissue>
    </source>
</reference>
<reference key="16">
    <citation type="journal article" date="1996" name="J. Biol. Chem.">
        <title>mUBC9, a novel adenovirus E1A-interacting protein that complements a yeast cell cycle defect.</title>
        <authorList>
            <person name="Hateboer G."/>
            <person name="Hijmans E.M."/>
            <person name="Nooij J.B.D."/>
            <person name="Schlenker S."/>
            <person name="Jentsch S."/>
            <person name="Bernards R."/>
        </authorList>
    </citation>
    <scope>INTERACTION WITH ADENOVIRUS E1A (MICROBIAL INFECTION)</scope>
</reference>
<reference key="17">
    <citation type="journal article" date="1997" name="Genes Dev.">
        <title>Mammalian homologs of seven in absentia regulate DCC via the ubiquitin-proteasome pathway.</title>
        <authorList>
            <person name="Hu G."/>
            <person name="Zhang S."/>
            <person name="Vidal M."/>
            <person name="Baer J.L."/>
            <person name="Xu T."/>
            <person name="Fearon E.R."/>
        </authorList>
    </citation>
    <scope>INTERACTION WITH SIAH1</scope>
</reference>
<reference key="18">
    <citation type="journal article" date="1999" name="J. Biol. Chem.">
        <title>Ubc9 interacts with the androgen receptor and activates receptor-dependent transcription.</title>
        <authorList>
            <person name="Poukka H."/>
            <person name="Aarnisalo P."/>
            <person name="Karvonen U."/>
            <person name="Palvimo J.J."/>
            <person name="Jaenne O.A."/>
        </authorList>
    </citation>
    <scope>INTERACTION WITH AR</scope>
</reference>
<reference key="19">
    <citation type="journal article" date="2000" name="Biochem. J.">
        <title>Association of FHIT (fragile histidine triad), a candidate tumour suppressor gene, with the ubiquitin-conjugating enzyme hUBC9.</title>
        <authorList>
            <person name="Shi Y."/>
            <person name="Zou M."/>
            <person name="Farid N.R."/>
            <person name="Paterson M.C."/>
        </authorList>
    </citation>
    <scope>INTERACTION WITH FHIT</scope>
</reference>
<reference key="20">
    <citation type="journal article" date="2001" name="J. Biol. Chem.">
        <title>Polymeric chains of SUMO-2 and SUMO-3 are conjugated to protein substrates by SAE1/SAE2 and Ubc9.</title>
        <authorList>
            <person name="Tatham M.H."/>
            <person name="Jaffray E."/>
            <person name="Vaughan O.A."/>
            <person name="Desterro J.M.P."/>
            <person name="Botting C.H."/>
            <person name="Naismith J.H."/>
            <person name="Hay R.T."/>
        </authorList>
    </citation>
    <scope>FUNCTION</scope>
</reference>
<reference key="21">
    <citation type="journal article" date="2002" name="J. Biol. Chem.">
        <title>Transcription factor AP-2 interacts with the SUMO-conjugating enzyme UBC9 and is sumolated in vivo.</title>
        <authorList>
            <person name="Eloranta J.J."/>
            <person name="Hurst H.C."/>
        </authorList>
    </citation>
    <scope>INTERACTION WITH TFAP2A; TFAP2B AND TFAP2C</scope>
</reference>
<reference key="22">
    <citation type="journal article" date="2003" name="Biochemistry">
        <title>Role of two residues proximal to the active site of Ubc9 in substrate recognition by the Ubc9.SUMO-1 thiolester complex.</title>
        <authorList>
            <person name="Tatham M.H."/>
            <person name="Chen Y."/>
            <person name="Hay R.T."/>
        </authorList>
    </citation>
    <scope>MUTAGENESIS OF 100-ASP-LYS-101</scope>
</reference>
<reference key="23">
    <citation type="journal article" date="2003" name="Virology">
        <title>The intracellular association of the nucleocapsid protein (NP) of hantaan virus (HTNV) with small ubiquitin-like modifier-1 (SUMO-1) conjugating enzyme 9 (Ubc9).</title>
        <authorList>
            <person name="Maeda A."/>
            <person name="Lee B.H."/>
            <person name="Yoshimatsu K."/>
            <person name="Saijo M."/>
            <person name="Kurane I."/>
            <person name="Arikawa J."/>
            <person name="Morikawa S."/>
        </authorList>
    </citation>
    <scope>INTERACTION WITH HANTAAN HANTAVIRUS NUCLEOPROTEIN (MICROBIAL INFECTION)</scope>
    <scope>SUBCELLULAR LOCATION</scope>
</reference>
<reference key="24">
    <citation type="journal article" date="2003" name="Biochemistry">
        <title>Role of an N-terminal site of Ubc9 in SUMO-1, -2, and -3 binding and conjugation.</title>
        <authorList>
            <person name="Tatham M.H."/>
            <person name="Kim S."/>
            <person name="Yu B."/>
            <person name="Jaffray E."/>
            <person name="Song J."/>
            <person name="Zheng J."/>
            <person name="Rodriguez M.S."/>
            <person name="Hay R.T."/>
            <person name="Chen Y."/>
        </authorList>
    </citation>
    <scope>INTERACTION WITH SUMO1; SUMO2; SUMO3 AND THE UBLE1A-UBLE1B E1 COMPLEX</scope>
    <scope>MUTAGENESIS OF 13-ARG-LYS-14 AND 17-ARG-LYS-18</scope>
</reference>
<reference key="25">
    <citation type="journal article" date="2004" name="Nat. Struct. Mol. Biol.">
        <title>The RanBP2 SUMO E3 ligase is neither HECT- nor RING-type.</title>
        <authorList>
            <person name="Pichler A."/>
            <person name="Knipscheer P."/>
            <person name="Saitoh H."/>
            <person name="Sixma T.K."/>
            <person name="Melchior F."/>
        </authorList>
    </citation>
    <scope>INTERACTION WITH RANBP2</scope>
</reference>
<reference key="26">
    <citation type="journal article" date="2005" name="Biochem. Biophys. Res. Commun.">
        <title>Requirement of the coiled-coil domain of PML-RARalpha oncoprotein for localization, sumoylation, and inhibition of monocyte differentiation.</title>
        <authorList>
            <person name="Kim Y.E."/>
            <person name="Kim D.Y."/>
            <person name="Lee J.M."/>
            <person name="Kim S.T."/>
            <person name="Han T.H."/>
            <person name="Ahn J.H."/>
        </authorList>
    </citation>
    <scope>INTERACTION WITH THE PML-RARALPHA ONCOPROTEIN</scope>
    <scope>FUNCTION</scope>
</reference>
<reference key="27">
    <citation type="journal article" date="2005" name="Nat. Struct. Mol. Biol.">
        <title>Unique binding interactions among Ubc9, SUMO and RanBP2 reveal a mechanism for SUMO paralog selection.</title>
        <authorList>
            <person name="Tatham M.H."/>
            <person name="Kim S."/>
            <person name="Jaffray E."/>
            <person name="Song J."/>
            <person name="Chen Y."/>
            <person name="Hay R.T."/>
        </authorList>
    </citation>
    <scope>INTERACTION WITH RANBP2</scope>
    <scope>MUTAGENESIS OF PHE-22; VAL-25; VAL-27; GLU-42; LYS-48; GLU-54; LEU-57; LYS-59 AND ARG-61</scope>
</reference>
<reference key="28">
    <citation type="journal article" date="2006" name="Arch. Biochem. Biophys.">
        <title>A general approach for investigating enzymatic pathways and substrates for ubiquitin-like modifiers.</title>
        <authorList>
            <person name="Li T."/>
            <person name="Santockyte R."/>
            <person name="Shen R.-F."/>
            <person name="Tekle E."/>
            <person name="Wang G."/>
            <person name="Yang D.C.H."/>
            <person name="Chock P.B."/>
        </authorList>
    </citation>
    <scope>IDENTIFICATION BY MASS SPECTROMETRY</scope>
</reference>
<reference key="29">
    <citation type="journal article" date="2006" name="Biochem. Biophys. Res. Commun.">
        <title>Ubc9 interacts with SOX4 and represses its transcriptional activity.</title>
        <authorList>
            <person name="Pan X."/>
            <person name="Li H."/>
            <person name="Zhang P."/>
            <person name="Jin B."/>
            <person name="Man J."/>
            <person name="Tian L."/>
            <person name="Su G."/>
            <person name="Zhao J."/>
            <person name="Li W."/>
            <person name="Liu H."/>
            <person name="Gong W."/>
            <person name="Zhou T."/>
            <person name="Zhang X."/>
        </authorList>
    </citation>
    <scope>SUBCELLULAR LOCATION</scope>
    <scope>INTERACTION WITH SOX4</scope>
</reference>
<reference key="30">
    <citation type="journal article" date="2006" name="J. Virol.">
        <title>Functional interaction between human herpesvirus 6 immediate-early 2 protein and ubiquitin-conjugating enzyme 9 in the absence of sumoylation.</title>
        <authorList>
            <person name="Tomoiu A."/>
            <person name="Gravel A."/>
            <person name="Tanguay R.M."/>
            <person name="Flamand L."/>
        </authorList>
    </citation>
    <scope>INTERACTION WITH HERPESVIRUS 6 IE2 (MICROBIAL INFECTION)</scope>
</reference>
<reference key="31">
    <citation type="journal article" date="2007" name="Cell">
        <title>RSUME, a small RWD-containing protein, enhances SUMO conjugation and stabilizes HIF-1alpha during hypoxia.</title>
        <authorList>
            <person name="Carbia-Nagashima A."/>
            <person name="Gerez J."/>
            <person name="Perez-Castro C."/>
            <person name="Paez-Pereda M."/>
            <person name="Silberstein S."/>
            <person name="Stalla G.K."/>
            <person name="Holsboer F."/>
            <person name="Arzt E."/>
        </authorList>
    </citation>
    <scope>INTERACTION WITH RWDD3</scope>
    <scope>SUBCELLULAR LOCATION</scope>
</reference>
<reference key="32">
    <citation type="journal article" date="2008" name="Oncogene">
        <title>Functional characterization of TIP60 sumoylation in UV-irradiated DNA damage response.</title>
        <authorList>
            <person name="Cheng Z."/>
            <person name="Ke Y."/>
            <person name="Ding X."/>
            <person name="Wang F."/>
            <person name="Wang H."/>
            <person name="Wang W."/>
            <person name="Ahmed K."/>
            <person name="Liu Z."/>
            <person name="Xu Y."/>
            <person name="Aikhionbare F."/>
            <person name="Yan H."/>
            <person name="Liu J."/>
            <person name="Xue Y."/>
            <person name="Yu J."/>
            <person name="Powell M."/>
            <person name="Liang S."/>
            <person name="Wu Q."/>
            <person name="Reddy S.E."/>
            <person name="Hu R."/>
            <person name="Huang H."/>
            <person name="Jin C."/>
            <person name="Yao X."/>
        </authorList>
    </citation>
    <scope>IDENTIFICATION BY MASS SPECTROMETRY</scope>
    <scope>IDENTIFICATION OF KAT5-UBE2I-SENP6 COMPLEX</scope>
</reference>
<reference key="33">
    <citation type="journal article" date="2009" name="Anal. Chem.">
        <title>Lys-N and trypsin cover complementary parts of the phosphoproteome in a refined SCX-based approach.</title>
        <authorList>
            <person name="Gauci S."/>
            <person name="Helbig A.O."/>
            <person name="Slijper M."/>
            <person name="Krijgsveld J."/>
            <person name="Heck A.J."/>
            <person name="Mohammed S."/>
        </authorList>
    </citation>
    <scope>ACETYLATION [LARGE SCALE ANALYSIS] AT SER-2</scope>
    <scope>CLEAVAGE OF INITIATOR METHIONINE [LARGE SCALE ANALYSIS]</scope>
    <scope>IDENTIFICATION BY MASS SPECTROMETRY [LARGE SCALE ANALYSIS]</scope>
</reference>
<reference key="34">
    <citation type="journal article" date="2009" name="Biochem. J.">
        <title>SUMOylation enhances DNA methyltransferase 1 activity.</title>
        <authorList>
            <person name="Lee B."/>
            <person name="Muller M.T."/>
        </authorList>
    </citation>
    <scope>INTERACTION WITH DNMT1</scope>
</reference>
<reference key="35">
    <citation type="journal article" date="2009" name="Cell. Signal.">
        <title>Sumoylation of forkhead L2 by Ubc9 is required for its activity as a transcriptional repressor of the steroidogenic acute regulatory gene.</title>
        <authorList>
            <person name="Kuo F.T."/>
            <person name="Bentsi-Barnes I.K."/>
            <person name="Barlow G.M."/>
            <person name="Bae J."/>
            <person name="Pisarska M.D."/>
        </authorList>
    </citation>
    <scope>INTERACTION WITH FOXL2</scope>
    <scope>ROLE IN FOXL2 SUMOYLATION</scope>
    <scope>SUBCELLULAR LOCATION</scope>
</reference>
<reference key="36">
    <citation type="journal article" date="2009" name="FASEB J.">
        <title>SUMOylation of the mitochondrial fission protein Drp1 occurs at multiple nonconsensus sites within the B domain and is linked to its activity cycle.</title>
        <authorList>
            <person name="Figueroa-Romero C."/>
            <person name="Iniguez-Lluhi J.A."/>
            <person name="Stadler J."/>
            <person name="Chang C.R."/>
            <person name="Arnoult D."/>
            <person name="Keller P.J."/>
            <person name="Hong Y."/>
            <person name="Blackstone C."/>
            <person name="Feldman E.L."/>
        </authorList>
    </citation>
    <scope>INTERACTION WITH DNM1L</scope>
    <scope>FUNCTION IN DNM1L SUMOYLATION</scope>
</reference>
<reference key="37">
    <citation type="journal article" date="2009" name="PLoS Pathog.">
        <title>Ebola Zaire virus blocks type I interferon production by exploiting the host SUMO modification machinery.</title>
        <authorList>
            <person name="Chang T.H."/>
            <person name="Kubota T."/>
            <person name="Matsuoka M."/>
            <person name="Jones S."/>
            <person name="Bradfute S.B."/>
            <person name="Bray M."/>
            <person name="Ozato K."/>
        </authorList>
    </citation>
    <scope>INTERACTION WITH EBOLAVIRUS VP35 (MICROBIAL INFECTION)</scope>
</reference>
<reference key="38">
    <citation type="journal article" date="2009" name="Science">
        <title>Lysine acetylation targets protein complexes and co-regulates major cellular functions.</title>
        <authorList>
            <person name="Choudhary C."/>
            <person name="Kumar C."/>
            <person name="Gnad F."/>
            <person name="Nielsen M.L."/>
            <person name="Rehman M."/>
            <person name="Walther T.C."/>
            <person name="Olsen J.V."/>
            <person name="Mann M."/>
        </authorList>
    </citation>
    <scope>ACETYLATION [LARGE SCALE ANALYSIS] AT LYS-65</scope>
    <scope>IDENTIFICATION BY MASS SPECTROMETRY [LARGE SCALE ANALYSIS]</scope>
</reference>
<reference key="39">
    <citation type="journal article" date="2010" name="Oncogene">
        <title>Identification of a molecular recognition feature in the E1A oncoprotein that binds the SUMO conjugase UBC9 and likely interferes with polySUMOylation.</title>
        <authorList>
            <person name="Yousef A.F."/>
            <person name="Fonseca G.J."/>
            <person name="Pelka P."/>
            <person name="Ablack J.N."/>
            <person name="Walsh C."/>
            <person name="Dick F.A."/>
            <person name="Bazett-Jones D.P."/>
            <person name="Shaw G.S."/>
            <person name="Mymryk J.S."/>
        </authorList>
    </citation>
    <scope>INTERACTION WITH HUMAN ADENOVIRUS EARLY E1A PROTEIN (MICROBIAL INFECTION)</scope>
</reference>
<reference key="40">
    <citation type="journal article" date="2011" name="BMC Syst. Biol.">
        <title>Initial characterization of the human central proteome.</title>
        <authorList>
            <person name="Burkard T.R."/>
            <person name="Planyavsky M."/>
            <person name="Kaupe I."/>
            <person name="Breitwieser F.P."/>
            <person name="Buerckstuemmer T."/>
            <person name="Bennett K.L."/>
            <person name="Superti-Furga G."/>
            <person name="Colinge J."/>
        </authorList>
    </citation>
    <scope>IDENTIFICATION BY MASS SPECTROMETRY [LARGE SCALE ANALYSIS]</scope>
</reference>
<reference key="41">
    <citation type="journal article" date="2011" name="J. Biol. Chem.">
        <title>SUMOylation and SUMO-interacting motif (SIM) of metastasis tumor antigen 1 (MTA1) synergistically regulate its transcriptional repressor function.</title>
        <authorList>
            <person name="Cong L."/>
            <person name="Pakala S.B."/>
            <person name="Ohshiro K."/>
            <person name="Li D.Q."/>
            <person name="Kumar R."/>
        </authorList>
    </citation>
    <scope>INTERACTION WITH MTA1</scope>
</reference>
<reference key="42">
    <citation type="journal article" date="2011" name="J. Virol.">
        <title>Epstein-Barr virus latent membrane protein 1 (LMP1) C-terminal-activating region 3 contributes to LMP1-mediated cellular migration via its interaction with Ubc9.</title>
        <authorList>
            <person name="Bentz G.L."/>
            <person name="Whitehurst C.B."/>
            <person name="Pagano J.S."/>
        </authorList>
    </citation>
    <scope>INTERACTION WITH EPSTEIN-BARR VIRUS LMP1 (MICROBIAL INFECTION)</scope>
</reference>
<reference key="43">
    <citation type="journal article" date="2012" name="Cell Cycle">
        <title>The RAX/PACT-PKR stress response pathway promotes p53 sumoylation and activation, leading to G(1) arrest.</title>
        <authorList>
            <person name="Bennett R.L."/>
            <person name="Pan Y."/>
            <person name="Christian J."/>
            <person name="Hui T."/>
            <person name="May W.S. Jr."/>
        </authorList>
    </citation>
    <scope>SUBCELLULAR LOCATION</scope>
</reference>
<reference key="44">
    <citation type="journal article" date="2012" name="PLoS ONE">
        <title>Phosphorylation of Ubc9 by Cdk1 enhances SUMOylation activity.</title>
        <authorList>
            <person name="Su Y.F."/>
            <person name="Yang T."/>
            <person name="Huang H."/>
            <person name="Liu L.F."/>
            <person name="Hwang J."/>
        </authorList>
    </citation>
    <scope>PHOSPHORYLATION AT SER-71</scope>
</reference>
<reference key="45">
    <citation type="journal article" date="2012" name="Proc. Natl. Acad. Sci. U.S.A.">
        <title>N-terminal acetylome analyses and functional insights of the N-terminal acetyltransferase NatB.</title>
        <authorList>
            <person name="Van Damme P."/>
            <person name="Lasa M."/>
            <person name="Polevoda B."/>
            <person name="Gazquez C."/>
            <person name="Elosegui-Artola A."/>
            <person name="Kim D.S."/>
            <person name="De Juan-Pardo E."/>
            <person name="Demeyer K."/>
            <person name="Hole K."/>
            <person name="Larrea E."/>
            <person name="Timmerman E."/>
            <person name="Prieto J."/>
            <person name="Arnesen T."/>
            <person name="Sherman F."/>
            <person name="Gevaert K."/>
            <person name="Aldabe R."/>
        </authorList>
    </citation>
    <scope>ACETYLATION [LARGE SCALE ANALYSIS] AT SER-2</scope>
    <scope>CLEAVAGE OF INITIATOR METHIONINE [LARGE SCALE ANALYSIS]</scope>
    <scope>IDENTIFICATION BY MASS SPECTROMETRY [LARGE SCALE ANALYSIS]</scope>
</reference>
<reference key="46">
    <citation type="journal article" date="2013" name="Genes Dev.">
        <title>A SUMO-dependent interaction between Senataxin and the exosome, disrupted in the neurodegenerative disease AOA2, targets the exosome to sites of transcription-induced DNA damage.</title>
        <authorList>
            <person name="Richard P."/>
            <person name="Feng S."/>
            <person name="Manley J.L."/>
        </authorList>
    </citation>
    <scope>INTERACTION WITH SETX</scope>
</reference>
<reference key="47">
    <citation type="journal article" date="2013" name="J. Biol. Chem.">
        <title>UHRF2, a ubiquitin E3 ligase, acts as a small ubiquitin-like modifier E3 ligase for zinc finger protein 131.</title>
        <authorList>
            <person name="Oh Y."/>
            <person name="Chung K.C."/>
        </authorList>
    </citation>
    <scope>INTERACTION WITH UHRF2</scope>
</reference>
<reference key="48">
    <citation type="journal article" date="2013" name="J. Proteome Res.">
        <title>Toward a comprehensive characterization of a human cancer cell phosphoproteome.</title>
        <authorList>
            <person name="Zhou H."/>
            <person name="Di Palma S."/>
            <person name="Preisinger C."/>
            <person name="Peng M."/>
            <person name="Polat A.N."/>
            <person name="Heck A.J."/>
            <person name="Mohammed S."/>
        </authorList>
    </citation>
    <scope>PHOSPHORYLATION [LARGE SCALE ANALYSIS] AT SER-71</scope>
    <scope>IDENTIFICATION BY MASS SPECTROMETRY [LARGE SCALE ANALYSIS]</scope>
    <source>
        <tissue>Cervix carcinoma</tissue>
        <tissue>Erythroleukemia</tissue>
    </source>
</reference>
<reference key="49">
    <citation type="journal article" date="2013" name="Mol. Cell. Biol.">
        <title>RSUME enhances glucocorticoid receptor SUMOylation and transcriptional activity.</title>
        <authorList>
            <person name="Druker J."/>
            <person name="Liberman A.C."/>
            <person name="Antunica-Noguerol M."/>
            <person name="Gerez J."/>
            <person name="Paez-Pereda M."/>
            <person name="Rein T."/>
            <person name="Iniguez-Lluhi J.A."/>
            <person name="Holsboer F."/>
            <person name="Arzt E."/>
        </authorList>
    </citation>
    <scope>INTERACTION WITH NR3C1</scope>
</reference>
<reference key="50">
    <citation type="journal article" date="2013" name="PLoS ONE">
        <title>In silico structural and functional characterization of the RSUME splice variants.</title>
        <authorList>
            <person name="Gerez J."/>
            <person name="Fuertes M."/>
            <person name="Tedesco L."/>
            <person name="Silberstein S."/>
            <person name="Sevlever G."/>
            <person name="Paez-Pereda M."/>
            <person name="Holsboer F."/>
            <person name="Turjanski A.G."/>
            <person name="Arzt E."/>
        </authorList>
    </citation>
    <scope>INTERACTION WITH RWDD3</scope>
</reference>
<reference key="51">
    <citation type="journal article" date="2014" name="J. Proteomics">
        <title>An enzyme assisted RP-RPLC approach for in-depth analysis of human liver phosphoproteome.</title>
        <authorList>
            <person name="Bian Y."/>
            <person name="Song C."/>
            <person name="Cheng K."/>
            <person name="Dong M."/>
            <person name="Wang F."/>
            <person name="Huang J."/>
            <person name="Sun D."/>
            <person name="Wang L."/>
            <person name="Ye M."/>
            <person name="Zou H."/>
        </authorList>
    </citation>
    <scope>IDENTIFICATION BY MASS SPECTROMETRY [LARGE SCALE ANALYSIS]</scope>
    <source>
        <tissue>Liver</tissue>
    </source>
</reference>
<reference key="52">
    <citation type="journal article" date="2014" name="Nat. Struct. Mol. Biol.">
        <title>Uncovering global SUMOylation signaling networks in a site-specific manner.</title>
        <authorList>
            <person name="Hendriks I.A."/>
            <person name="D'Souza R.C."/>
            <person name="Yang B."/>
            <person name="Verlaan-de Vries M."/>
            <person name="Mann M."/>
            <person name="Vertegaal A.C."/>
        </authorList>
    </citation>
    <scope>SUMOYLATION [LARGE SCALE ANALYSIS] AT LYS-49</scope>
    <scope>IDENTIFICATION BY MASS SPECTROMETRY [LARGE SCALE ANALYSIS]</scope>
</reference>
<reference key="53">
    <citation type="journal article" date="2014" name="Proc. Natl. Acad. Sci. U.S.A.">
        <title>Mapping of SUMO sites and analysis of SUMOylation changes induced by external stimuli.</title>
        <authorList>
            <person name="Impens F."/>
            <person name="Radoshevich L."/>
            <person name="Cossart P."/>
            <person name="Ribet D."/>
        </authorList>
    </citation>
    <scope>SUMOYLATION [LARGE SCALE ANALYSIS] AT LYS-49</scope>
    <scope>IDENTIFICATION BY MASS SPECTROMETRY [LARGE SCALE ANALYSIS]</scope>
</reference>
<reference key="54">
    <citation type="journal article" date="2015" name="Cell Rep.">
        <title>SUMO-2 orchestrates chromatin modifiers in response to DNA damage.</title>
        <authorList>
            <person name="Hendriks I.A."/>
            <person name="Treffers L.W."/>
            <person name="Verlaan-de Vries M."/>
            <person name="Olsen J.V."/>
            <person name="Vertegaal A.C."/>
        </authorList>
    </citation>
    <scope>SUMOYLATION [LARGE SCALE ANALYSIS] AT LYS-49</scope>
    <scope>IDENTIFICATION BY MASS SPECTROMETRY [LARGE SCALE ANALYSIS]</scope>
</reference>
<reference key="55">
    <citation type="journal article" date="2015" name="Mol. Cell. Proteomics">
        <title>System-wide analysis of SUMOylation dynamics in response to replication stress reveals novel small ubiquitin-like modified target proteins and acceptor lysines relevant for genome stability.</title>
        <authorList>
            <person name="Xiao Z."/>
            <person name="Chang J.G."/>
            <person name="Hendriks I.A."/>
            <person name="Sigurdsson J.O."/>
            <person name="Olsen J.V."/>
            <person name="Vertegaal A.C."/>
        </authorList>
    </citation>
    <scope>SUMOYLATION [LARGE SCALE ANALYSIS] AT LYS-48 AND LYS-49</scope>
    <scope>IDENTIFICATION BY MASS SPECTROMETRY [LARGE SCALE ANALYSIS]</scope>
</reference>
<reference key="56">
    <citation type="journal article" date="2015" name="Proteomics">
        <title>N-terminome analysis of the human mitochondrial proteome.</title>
        <authorList>
            <person name="Vaca Jacome A.S."/>
            <person name="Rabilloud T."/>
            <person name="Schaeffer-Reiss C."/>
            <person name="Rompais M."/>
            <person name="Ayoub D."/>
            <person name="Lane L."/>
            <person name="Bairoch A."/>
            <person name="Van Dorsselaer A."/>
            <person name="Carapito C."/>
        </authorList>
    </citation>
    <scope>IDENTIFICATION BY MASS SPECTROMETRY [LARGE SCALE ANALYSIS]</scope>
</reference>
<reference key="57">
    <citation type="journal article" date="2016" name="J. Biol. Chem.">
        <title>The C-terminal Region and SUMOylation of Cockayne Syndrome Group B Protein Play Critical Roles in Transcription-coupled Nucleotide Excision Repair.</title>
        <authorList>
            <person name="Sin Y."/>
            <person name="Tanaka K."/>
            <person name="Saijo M."/>
        </authorList>
    </citation>
    <scope>FUNCTION</scope>
</reference>
<reference key="58">
    <citation type="journal article" date="2016" name="J. Biol. Chem.">
        <title>Transcription Factor hDREF Is a Novel SUMO E3 Ligase of Mi2alpha.</title>
        <authorList>
            <person name="Yamashita D."/>
            <person name="Moriuchi T."/>
            <person name="Osumi T."/>
            <person name="Hirose F."/>
        </authorList>
    </citation>
    <scope>INTERACTION WITH ZBED1</scope>
    <scope>SUBCELLULAR LOCATION</scope>
</reference>
<reference key="59">
    <citation type="journal article" date="2016" name="Sci. Rep.">
        <title>SUMO5, a novel poly-sumo isoform, regulates pml nuclear bodies.</title>
        <authorList>
            <person name="Liang Y.C."/>
            <person name="Lee C.C."/>
            <person name="Yao Y.L."/>
            <person name="Lai C.C."/>
            <person name="Schmitz M.L."/>
            <person name="Yang W.M."/>
        </authorList>
    </citation>
    <scope>INTERACTION WITH SUMO1P1/SUMO5</scope>
</reference>
<reference key="60">
    <citation type="journal article" date="2017" name="Nat. Struct. Mol. Biol.">
        <title>Site-specific mapping of the human SUMO proteome reveals co-modification with phosphorylation.</title>
        <authorList>
            <person name="Hendriks I.A."/>
            <person name="Lyon D."/>
            <person name="Young C."/>
            <person name="Jensen L.J."/>
            <person name="Vertegaal A.C."/>
            <person name="Nielsen M.L."/>
        </authorList>
    </citation>
    <scope>SUMOYLATION [LARGE SCALE ANALYSIS] AT LYS-18; LYS-48; LYS-49 AND LYS-101</scope>
    <scope>IDENTIFICATION BY MASS SPECTROMETRY [LARGE SCALE ANALYSIS]</scope>
</reference>
<reference key="61">
    <citation type="journal article" date="2021" name="Front. Microbiol.">
        <title>Sumoylation of the Carboxy-Terminal of Human Cytomegalovirus DNA Polymerase Processivity Factor UL44 Attenuates Viral DNA Replication.</title>
        <authorList>
            <person name="Chen J."/>
            <person name="Li G."/>
            <person name="He H."/>
            <person name="Li X."/>
            <person name="Niu W."/>
            <person name="Cao D."/>
            <person name="Shen A."/>
        </authorList>
    </citation>
    <scope>INTERACTION WITH HUMAN CYTOMEGALOVIRUS PROTEIN UL44 (MICROBIAL INFECTION)</scope>
</reference>
<reference key="62">
    <citation type="journal article" date="1997" name="J. Biol. Chem.">
        <title>Crystal structure of murine/human Ubc9 provides insight into the variability of the ubiquitin-conjugating system.</title>
        <authorList>
            <person name="Tong H."/>
            <person name="Hateboer G."/>
            <person name="Perrakis A."/>
            <person name="Bernards R."/>
            <person name="Sixma T.K."/>
        </authorList>
    </citation>
    <scope>X-RAY CRYSTALLOGRAPHY (2.0 ANGSTROMS)</scope>
</reference>
<reference key="63">
    <citation type="journal article" date="2002" name="Cell">
        <title>Structural basis for E2-mediated SUMO conjugation revealed by a complex between ubiquitin-conjugating enzyme Ubc9 and RanGAP1.</title>
        <authorList>
            <person name="Bernier-Villamor V."/>
            <person name="Sampson D.A."/>
            <person name="Matunis M.J."/>
            <person name="Lima C.D."/>
        </authorList>
    </citation>
    <scope>X-RAY CRYSTALLOGRAPHY (2.5 ANGSTROMS) IN COMPLEX WITH RANGAP1</scope>
</reference>
<reference key="64">
    <citation type="journal article" date="2005" name="Nature">
        <title>Insights into E3 ligase activity revealed by a SUMO-RanGAP1-Ubc9-Nup358 complex.</title>
        <authorList>
            <person name="Reverter D."/>
            <person name="Lima C.D."/>
        </authorList>
    </citation>
    <scope>X-RAY CRYSTALLOGRAPHY (3.01 ANGSTROMS) IN COMPLEX WITH SUMO1; RANGAP1 AND RANBP2</scope>
</reference>
<reference key="65">
    <citation type="journal article" date="2006" name="Nat. Struct. Mol. Biol.">
        <title>Lysine activation and functional analysis of E2-mediated conjugation in the SUMO pathway.</title>
        <authorList>
            <person name="Yunus A.A."/>
            <person name="Lima C.D."/>
        </authorList>
    </citation>
    <scope>X-RAY CRYSTALLOGRAPHY (1.8 ANGSTROMS) IN COMPLEX WITH RANGAP1</scope>
    <scope>MUTAGENESIS OF ASN-85; TYR-87 AND ASP-127</scope>
</reference>
<reference key="66">
    <citation type="journal article" date="2007" name="J. Mol. Biol.">
        <title>Structure and analysis of a complex between SUMO and Ubc9 illustrates features of a conserved E2-Ubl interaction.</title>
        <authorList>
            <person name="Capili A.D."/>
            <person name="Lima C.D."/>
        </authorList>
    </citation>
    <scope>X-RAY CRYSTALLOGRAPHY (2.4 ANGSTROMS) IN COMPLEX WITH SUMO1</scope>
    <scope>INTERACTION WITH SUMO1; SUMO2 AND SUMO3</scope>
    <scope>FUNCTION</scope>
</reference>
<reference key="67">
    <citation type="journal article" date="2010" name="Proteins">
        <title>Structural basis for regulation of poly-SUMO chain by a SUMO-like domain of Nip45.</title>
        <authorList>
            <person name="Sekiyama N."/>
            <person name="Arita K."/>
            <person name="Ikeda Y."/>
            <person name="Hashiguchi K."/>
            <person name="Ariyoshi M."/>
            <person name="Tochio H."/>
            <person name="Saitoh H."/>
            <person name="Shirakawa M."/>
        </authorList>
    </citation>
    <scope>X-RAY CRYSTALLOGRAPHY (2.7 ANGSTROMS) IN COMPLEX WITH NFATC2IP/NIP45</scope>
    <scope>INTERACTION WITH NFATC2IP</scope>
    <scope>FUNCTION</scope>
</reference>
<reference key="68">
    <citation type="journal article" date="2011" name="EMBO J.">
        <title>Structure of Importin13-Ubc9 complex: nuclear import and release of a key regulator of sumoylation.</title>
        <authorList>
            <person name="Grunwald M."/>
            <person name="Bono F."/>
        </authorList>
    </citation>
    <scope>X-RAY CRYSTALLOGRAPHY (2.8 ANGSTROMS) IN COMPLEX WITH IPO13</scope>
</reference>
<reference key="69">
    <citation type="journal article" date="2015" name="J. Biol. Chem.">
        <title>RWD domain as an E2 (Ubc9)-interaction module.</title>
        <authorList>
            <person name="Alontaga A.Y."/>
            <person name="Ambaye N.D."/>
            <person name="Li Y.J."/>
            <person name="Vega R."/>
            <person name="Chen C.H."/>
            <person name="Bzymek K.P."/>
            <person name="Williams J.C."/>
            <person name="Hu W."/>
            <person name="Chen Y."/>
        </authorList>
    </citation>
    <scope>X-RAY CRYSTALLOGRAPHY (2.70 ANGSTROMS) IN COMPLEX WITH RWDD3</scope>
    <scope>INTERACTION WITH RWDD3</scope>
</reference>
<reference key="70">
    <citation type="journal article" date="2015" name="Nat. Struct. Mol. Biol.">
        <title>Structural basis for catalytic activation by the human ZNF451 SUMO E3 ligase.</title>
        <authorList>
            <person name="Cappadocia L."/>
            <person name="Pichler A."/>
            <person name="Lima C.D."/>
        </authorList>
    </citation>
    <scope>X-RAY CRYSTALLOGRAPHY (2.40 ANGSTROMS) IN COMPLEX WITH ZNF451 AND SUMO2</scope>
    <scope>FUNCTION</scope>
    <scope>CATALYTIC ACTIVITY</scope>
    <scope>PATHWAY</scope>
    <scope>INTERACTION WITH ZNF451 AND SUMO2</scope>
</reference>
<keyword id="KW-0002">3D-structure</keyword>
<keyword id="KW-0007">Acetylation</keyword>
<keyword id="KW-0067">ATP-binding</keyword>
<keyword id="KW-0131">Cell cycle</keyword>
<keyword id="KW-0132">Cell division</keyword>
<keyword id="KW-0159">Chromosome partition</keyword>
<keyword id="KW-0963">Cytoplasm</keyword>
<keyword id="KW-0945">Host-virus interaction</keyword>
<keyword id="KW-1017">Isopeptide bond</keyword>
<keyword id="KW-0498">Mitosis</keyword>
<keyword id="KW-0547">Nucleotide-binding</keyword>
<keyword id="KW-0539">Nucleus</keyword>
<keyword id="KW-0597">Phosphoprotein</keyword>
<keyword id="KW-1267">Proteomics identification</keyword>
<keyword id="KW-1185">Reference proteome</keyword>
<keyword id="KW-0808">Transferase</keyword>
<keyword id="KW-0832">Ubl conjugation</keyword>
<keyword id="KW-0833">Ubl conjugation pathway</keyword>
<organism>
    <name type="scientific">Homo sapiens</name>
    <name type="common">Human</name>
    <dbReference type="NCBI Taxonomy" id="9606"/>
    <lineage>
        <taxon>Eukaryota</taxon>
        <taxon>Metazoa</taxon>
        <taxon>Chordata</taxon>
        <taxon>Craniata</taxon>
        <taxon>Vertebrata</taxon>
        <taxon>Euteleostomi</taxon>
        <taxon>Mammalia</taxon>
        <taxon>Eutheria</taxon>
        <taxon>Euarchontoglires</taxon>
        <taxon>Primates</taxon>
        <taxon>Haplorrhini</taxon>
        <taxon>Catarrhini</taxon>
        <taxon>Hominidae</taxon>
        <taxon>Homo</taxon>
    </lineage>
</organism>
<sequence>MSGIALSRLAQERKAWRKDHPFGFVAVPTKNPDGTMNLMNWECAIPGKKGTPWEGGLFKLRMLFKDDYPSSPPKCKFEPPLFHPNVYPSGTVCLSILEEDKDWRPAITIKQILLGIQELLNEPNIQDPAQAEAYTIYCQNRVEYEKRVRAQAKKFAPS</sequence>
<gene>
    <name type="primary">UBE2I</name>
    <name type="synonym">UBC9</name>
    <name type="synonym">UBCE9</name>
</gene>
<comment type="function">
    <text evidence="6 14 19 24 25 26 38 39 41 44">Accepts the ubiquitin-like proteins SUMO1, SUMO2, SUMO3, SUMO4 and SUMO1P1/SUMO5 from the UBLE1A-UBLE1B E1 complex and catalyzes their covalent attachment to other proteins with the help of an E3 ligase such as RANBP2, CBX4 and ZNF451. Can catalyze the formation of poly-SUMO chains. Necessary for sumoylation of FOXL2 and KAT5. Essential for nuclear architecture and chromosome segregation. Sumoylates p53/TP53 at 'Lys-386'. Mediates sumoylation of ERCC6 which is essential for its transcription-coupled nucleotide excision repair activity (PubMed:26620705).</text>
</comment>
<comment type="pathway">
    <text evidence="38">Protein modification; protein sumoylation.</text>
</comment>
<comment type="subunit">
    <text evidence="1 2 4 5 7 8 11 12 13 14 15 16 17 19 20 21 22 24 25 26 28 30 33 34 35 36 37 38 40 41 46 47 48 49">Forms a complex with SENP6 and UBE2I in response to UV irradiation (PubMed:17704809). Forms a tight complex with RANGAP1 and RANBP2 (PubMed:11853669, PubMed:15378033, PubMed:15608651, PubMed:15931224, PubMed:16732283). Identified in a complex with SUMO2 and UBE2I, where one ZNF451 interacts with one UBE2I and two SUMO2 chains, one bound to the UBE2I active site and the other to another region of the same UBE2I molecule (PubMed:12924945, PubMed:26524494). Interacts with SETX (PubMed:24105744). Interacts with HIPK1 and HIPK2 (By similarity). Interacts with PPM1J (By similarity). Interacts with RASD2 (By similarity). Interacts with TCF3 (By similarity). Interacts with NR2C1; the interaction promotes its sumoylation (By similarity). Interacts with SIAH1 (PubMed:9334332). Interacts with PARP (PubMed:9197546). Interacts with various transcription factors such as TFAP2A, TFAP2B, and TFAP2C (PubMed:12072434). Interacts with AR (PubMed:10383460). Interacts with ETS1 (PubMed:9333025). Interacts with SOX4 (PubMed:16631117). Interacts with RWDD3; the interaction enhances the sumoylation of a number of proteins such as HIF1A and I-kappa-B (PubMed:17956732, PubMed:23469069). Interacts with FOXL2 (PubMed:19744555). Interacts with DNM1l (via its GTPase and B domains); the interaction promotes sumoylation of DNM1L, mainly in its B domain (PubMed:19638400). Interacts with NFATC2IP; this inhibits formation of poly-SUMO chains (PubMed:20077568). Interacts with FHIT (PubMed:11085938). Interacts with PRKRA and p53/TP53 (By similarity). Interacts with UHRF2 (PubMed:23404503). Interacts with NR3C1 and this interaction is enhanced in the presence of RWDD3 (PubMed:23508108, PubMed:25918163). Interacts with MTA1 (PubMed:21965678). Interacts with ZNF451 (PubMed:26524494). Interacts with CPEB3 (By similarity). Interacts with SUMO1, SUMO2 and SUMO3 (PubMed:17466333). Interacts with IPO13 (PubMed:21139563). Interacts with DNMT1 (PubMed:19450230). Interacts with SUMO1P1/SUMO5 (PubMed:27211601). Interacts with PML-RARA oncoprotein (via the coiled-colied domain); the interaction is required for sumoylation of the PML-RARA oncoprotein (PubMed:15809060). Interacts with ZBED1/hDREF (PubMed:27068747).</text>
</comment>
<comment type="subunit">
    <text evidence="18">(Microbial infection) Interacts with human herpesvirus 6 IE2.</text>
</comment>
<comment type="subunit">
    <text evidence="27 45">(Microbial infection) Interacts with human adenovirus early E1A protein; this interaction interferes with polysumoylation.</text>
</comment>
<comment type="subunit">
    <text evidence="29">(Microbial infection) Interacts with Epstein-barr virus protein LMP1.</text>
</comment>
<comment type="subunit">
    <text evidence="23">(Microbial infection) Interacts with ebolavirus VP35; this interaction mediates the sumoylation of IRF7 and contributes to the viral inhibition of IFN-type I production.</text>
</comment>
<comment type="subunit">
    <text evidence="9">(Microbial infection) Interacts with Hantaan hantavirus nucleoprotein.</text>
</comment>
<comment type="subunit">
    <text evidence="42">(Microbial infection) Interacts with human cytomegalovirus protein UL44.</text>
</comment>
<comment type="interaction">
    <interactant intactId="EBI-80168">
        <id>P63279</id>
    </interactant>
    <interactant intactId="EBI-930964">
        <id>P54253</id>
        <label>ATXN1</label>
    </interactant>
    <organismsDiffer>false</organismsDiffer>
    <experiments>7</experiments>
</comment>
<comment type="interaction">
    <interactant intactId="EBI-80168">
        <id>P63279</id>
    </interactant>
    <interactant intactId="EBI-711810">
        <id>O14503</id>
        <label>BHLHE40</label>
    </interactant>
    <organismsDiffer>false</organismsDiffer>
    <experiments>3</experiments>
</comment>
<comment type="interaction">
    <interactant intactId="EBI-80168">
        <id>P63279</id>
    </interactant>
    <interactant intactId="EBI-749627">
        <id>Q9H444</id>
        <label>CHMP4B</label>
    </interactant>
    <organismsDiffer>false</organismsDiffer>
    <experiments>3</experiments>
</comment>
<comment type="interaction">
    <interactant intactId="EBI-80168">
        <id>P63279</id>
    </interactant>
    <interactant intactId="EBI-77321">
        <id>Q9UER7</id>
        <label>DAXX</label>
    </interactant>
    <organismsDiffer>false</organismsDiffer>
    <experiments>3</experiments>
</comment>
<comment type="interaction">
    <interactant intactId="EBI-80168">
        <id>P63279</id>
    </interactant>
    <interactant intactId="EBI-80125">
        <id>Q9UBC3</id>
        <label>DNMT3B</label>
    </interactant>
    <organismsDiffer>false</organismsDiffer>
    <experiments>3</experiments>
</comment>
<comment type="interaction">
    <interactant intactId="EBI-80168">
        <id>P63279</id>
    </interactant>
    <interactant intactId="EBI-2949647">
        <id>Q8WWZ3</id>
        <label>EDARADD</label>
    </interactant>
    <organismsDiffer>false</organismsDiffer>
    <experiments>3</experiments>
</comment>
<comment type="interaction">
    <interactant intactId="EBI-80168">
        <id>P63279</id>
    </interactant>
    <interactant intactId="EBI-726632">
        <id>P19419</id>
        <label>ELK1</label>
    </interactant>
    <organismsDiffer>false</organismsDiffer>
    <experiments>7</experiments>
</comment>
<comment type="interaction">
    <interactant intactId="EBI-80168">
        <id>P63279</id>
    </interactant>
    <interactant intactId="EBI-2548508">
        <id>Q96IK5</id>
        <label>GMCL1</label>
    </interactant>
    <organismsDiffer>false</organismsDiffer>
    <experiments>4</experiments>
</comment>
<comment type="interaction">
    <interactant intactId="EBI-80168">
        <id>P63279</id>
    </interactant>
    <interactant intactId="EBI-618309">
        <id>Q08379</id>
        <label>GOLGA2</label>
    </interactant>
    <organismsDiffer>false</organismsDiffer>
    <experiments>4</experiments>
</comment>
<comment type="interaction">
    <interactant intactId="EBI-80168">
        <id>P63279</id>
    </interactant>
    <interactant intactId="EBI-308629">
        <id>P56524</id>
        <label>HDAC4</label>
    </interactant>
    <organismsDiffer>false</organismsDiffer>
    <experiments>3</experiments>
</comment>
<comment type="interaction">
    <interactant intactId="EBI-80168">
        <id>P63279</id>
    </interactant>
    <interactant intactId="EBI-466029">
        <id>P42858</id>
        <label>HTT</label>
    </interactant>
    <organismsDiffer>false</organismsDiffer>
    <experiments>3</experiments>
</comment>
<comment type="interaction">
    <interactant intactId="EBI-80168">
        <id>P63279</id>
    </interactant>
    <interactant intactId="EBI-747310">
        <id>O94829</id>
        <label>IPO13</label>
    </interactant>
    <organismsDiffer>false</organismsDiffer>
    <experiments>6</experiments>
</comment>
<comment type="interaction">
    <interactant intactId="EBI-80168">
        <id>P63279</id>
    </interactant>
    <interactant intactId="EBI-348555">
        <id>O75928</id>
        <label>PIAS2</label>
    </interactant>
    <organismsDiffer>false</organismsDiffer>
    <experiments>8</experiments>
</comment>
<comment type="interaction">
    <interactant intactId="EBI-80168">
        <id>P63279</id>
    </interactant>
    <interactant intactId="EBI-973138">
        <id>P49792</id>
        <label>RANBP2</label>
    </interactant>
    <organismsDiffer>false</organismsDiffer>
    <experiments>6</experiments>
</comment>
<comment type="interaction">
    <interactant intactId="EBI-80168">
        <id>P63279</id>
    </interactant>
    <interactant intactId="EBI-396091">
        <id>P46060</id>
        <label>RANGAP1</label>
    </interactant>
    <organismsDiffer>false</organismsDiffer>
    <experiments>14</experiments>
</comment>
<comment type="interaction">
    <interactant intactId="EBI-80168">
        <id>P63279</id>
    </interactant>
    <interactant intactId="EBI-2129175">
        <id>Q6ZNA4</id>
        <label>RNF111</label>
    </interactant>
    <organismsDiffer>false</organismsDiffer>
    <experiments>5</experiments>
</comment>
<comment type="interaction">
    <interactant intactId="EBI-80168">
        <id>P63279</id>
    </interactant>
    <interactant intactId="EBI-353675">
        <id>Q9Y265</id>
        <label>RUVBL1</label>
    </interactant>
    <organismsDiffer>false</organismsDiffer>
    <experiments>3</experiments>
</comment>
<comment type="interaction">
    <interactant intactId="EBI-80168">
        <id>P63279</id>
    </interactant>
    <interactant intactId="EBI-1549885">
        <id>Q9Y3V2</id>
        <label>RWDD3</label>
    </interactant>
    <organismsDiffer>false</organismsDiffer>
    <experiments>5</experiments>
</comment>
<comment type="interaction">
    <interactant intactId="EBI-80168">
        <id>P63279</id>
    </interactant>
    <interactant intactId="EBI-1220123">
        <id>Q7Z333</id>
        <label>SETX</label>
    </interactant>
    <organismsDiffer>false</organismsDiffer>
    <experiments>3</experiments>
</comment>
<comment type="interaction">
    <interactant intactId="EBI-80168">
        <id>P63279</id>
    </interactant>
    <interactant intactId="EBI-347263">
        <id>Q13485</id>
        <label>SMAD4</label>
    </interactant>
    <organismsDiffer>false</organismsDiffer>
    <experiments>6</experiments>
</comment>
<comment type="interaction">
    <interactant intactId="EBI-80168">
        <id>P63279</id>
    </interactant>
    <interactant intactId="EBI-1167533">
        <id>P56693</id>
        <label>SOX10</label>
    </interactant>
    <organismsDiffer>false</organismsDiffer>
    <experiments>2</experiments>
</comment>
<comment type="interaction">
    <interactant intactId="EBI-80168">
        <id>P63279</id>
    </interactant>
    <interactant intactId="EBI-80140">
        <id>P63165</id>
        <label>SUMO1</label>
    </interactant>
    <organismsDiffer>false</organismsDiffer>
    <experiments>14</experiments>
</comment>
<comment type="interaction">
    <interactant intactId="EBI-80168">
        <id>P63279</id>
    </interactant>
    <interactant intactId="EBI-10175576">
        <id>G2XKQ0</id>
        <label>SUMO1P1</label>
    </interactant>
    <organismsDiffer>false</organismsDiffer>
    <experiments>3</experiments>
</comment>
<comment type="interaction">
    <interactant intactId="EBI-80168">
        <id>P63279</id>
    </interactant>
    <interactant intactId="EBI-473220">
        <id>P61956</id>
        <label>SUMO2</label>
    </interactant>
    <organismsDiffer>false</organismsDiffer>
    <experiments>5</experiments>
</comment>
<comment type="interaction">
    <interactant intactId="EBI-80168">
        <id>P63279</id>
    </interactant>
    <interactant intactId="EBI-347351">
        <id>P05549</id>
        <label>TFAP2A</label>
    </interactant>
    <organismsDiffer>false</organismsDiffer>
    <experiments>4</experiments>
</comment>
<comment type="interaction">
    <interactant intactId="EBI-80168">
        <id>P63279</id>
    </interactant>
    <interactant intactId="EBI-937309">
        <id>Q92754</id>
        <label>TFAP2C</label>
    </interactant>
    <organismsDiffer>false</organismsDiffer>
    <experiments>5</experiments>
</comment>
<comment type="interaction">
    <interactant intactId="EBI-80168">
        <id>P63279</id>
    </interactant>
    <interactant intactId="EBI-717422">
        <id>Q12800</id>
        <label>TFCP2</label>
    </interactant>
    <organismsDiffer>false</organismsDiffer>
    <experiments>4</experiments>
</comment>
<comment type="interaction">
    <interactant intactId="EBI-80168">
        <id>P63279</id>
    </interactant>
    <interactant intactId="EBI-366083">
        <id>P04637</id>
        <label>TP53</label>
    </interactant>
    <organismsDiffer>false</organismsDiffer>
    <experiments>3</experiments>
</comment>
<comment type="interaction">
    <interactant intactId="EBI-80168">
        <id>P63279</id>
    </interactant>
    <interactant intactId="EBI-709688">
        <id>P22314</id>
        <label>UBA1</label>
    </interactant>
    <organismsDiffer>false</organismsDiffer>
    <experiments>2</experiments>
</comment>
<comment type="interaction">
    <interactant intactId="EBI-80168">
        <id>P63279</id>
    </interactant>
    <interactant intactId="EBI-718569">
        <id>Q9UBT2</id>
        <label>UBA2</label>
    </interactant>
    <organismsDiffer>false</organismsDiffer>
    <experiments>8</experiments>
</comment>
<comment type="interaction">
    <interactant intactId="EBI-80168">
        <id>P63279</id>
    </interactant>
    <interactant intactId="EBI-3918996">
        <id>Q9HCK0</id>
        <label>ZBTB26</label>
    </interactant>
    <organismsDiffer>false</organismsDiffer>
    <experiments>3</experiments>
</comment>
<comment type="interaction">
    <interactant intactId="EBI-80168">
        <id>P63279</id>
    </interactant>
    <interactant intactId="EBI-7265024">
        <id>Q8N3Z6</id>
        <label>ZCCHC7</label>
    </interactant>
    <organismsDiffer>false</organismsDiffer>
    <experiments>3</experiments>
</comment>
<comment type="interaction">
    <interactant intactId="EBI-80168">
        <id>P63279</id>
    </interactant>
    <interactant intactId="EBI-747230">
        <id>Q9Y4E5</id>
        <label>ZNF451</label>
    </interactant>
    <organismsDiffer>false</organismsDiffer>
    <experiments>4</experiments>
</comment>
<comment type="interaction">
    <interactant intactId="EBI-80168">
        <id>P63279</id>
    </interactant>
    <interactant intactId="EBI-7015985">
        <id>P03116</id>
        <label>E1</label>
    </interactant>
    <organismsDiffer>true</organismsDiffer>
    <experiments>2</experiments>
</comment>
<comment type="interaction">
    <interactant intactId="EBI-80168">
        <id>P63279</id>
    </interactant>
    <interactant intactId="EBI-6973030">
        <id>P03230</id>
        <label>LMP1</label>
    </interactant>
    <organismsDiffer>true</organismsDiffer>
    <experiments>5</experiments>
</comment>
<comment type="interaction">
    <interactant intactId="EBI-80168">
        <id>P63279</id>
    </interactant>
    <interactant intactId="EBI-7602718">
        <id>P59595</id>
        <label>N</label>
    </interactant>
    <organismsDiffer>true</organismsDiffer>
    <experiments>12</experiments>
</comment>
<comment type="interaction">
    <interactant intactId="EBI-80168">
        <id>P63279</id>
    </interactant>
    <interactant intactId="EBI-8826488">
        <id>PRO_0000037946</id>
        <dbReference type="UniProtKB" id="P29991"/>
    </interactant>
    <organismsDiffer>true</organismsDiffer>
    <experiments>3</experiments>
</comment>
<comment type="subcellular location">
    <subcellularLocation>
        <location evidence="16 25 31 40">Nucleus</location>
    </subcellularLocation>
    <subcellularLocation>
        <location evidence="31">Cytoplasm</location>
    </subcellularLocation>
    <subcellularLocation>
        <location evidence="9">Cytoplasm</location>
        <location evidence="9">Perinuclear region</location>
    </subcellularLocation>
    <text evidence="1 43">Mainly nuclear (By similarity). In spermatocytes, localizes in synaptonemal complexes (PubMed:8610150). Recruited by BCL11A into the nuclear body (By similarity).</text>
</comment>
<comment type="tissue specificity">
    <text evidence="43">Expressed in heart, skeletal muscle, pancreas, kidney, liver, lung, placenta and brain. Also expressed in testis and thymus.</text>
</comment>
<comment type="PTM">
    <text evidence="32">Phosphorylation at Ser-71 significantly enhances SUMOylation activity.</text>
</comment>
<comment type="similarity">
    <text evidence="3">Belongs to the ubiquitin-conjugating enzyme family.</text>
</comment>
<comment type="sequence caution" evidence="49">
    <conflict type="erroneous initiation">
        <sequence resource="EMBL-CDS" id="AAH51289"/>
    </conflict>
    <text>Extended N-terminus.</text>
</comment>
<comment type="sequence caution" evidence="49">
    <conflict type="erroneous initiation">
        <sequence resource="EMBL-CDS" id="BAD92225"/>
    </conflict>
    <text>Extended N-terminus.</text>
</comment>
<name>UBC9_HUMAN</name>
<protein>
    <recommendedName>
        <fullName>SUMO-conjugating enzyme UBC9</fullName>
        <ecNumber evidence="38">2.3.2.-</ecNumber>
    </recommendedName>
    <alternativeName>
        <fullName>RING-type E3 SUMO transferase UBC9</fullName>
    </alternativeName>
    <alternativeName>
        <fullName>SUMO-protein ligase</fullName>
    </alternativeName>
    <alternativeName>
        <fullName>Ubiquitin carrier protein 9</fullName>
    </alternativeName>
    <alternativeName>
        <fullName>Ubiquitin carrier protein I</fullName>
    </alternativeName>
    <alternativeName>
        <fullName>Ubiquitin-conjugating enzyme E2 I</fullName>
    </alternativeName>
    <alternativeName>
        <fullName>Ubiquitin-protein ligase I</fullName>
    </alternativeName>
    <alternativeName>
        <fullName>p18</fullName>
    </alternativeName>
</protein>
<feature type="initiator methionine" description="Removed" evidence="50 52">
    <location>
        <position position="1"/>
    </location>
</feature>
<feature type="chain" id="PRO_0000082454" description="SUMO-conjugating enzyme UBC9">
    <location>
        <begin position="2"/>
        <end position="158"/>
    </location>
</feature>
<feature type="domain" description="UBC core" evidence="3">
    <location>
        <begin position="4"/>
        <end position="157"/>
    </location>
</feature>
<feature type="region of interest" description="Interaction with SUMO1">
    <location>
        <begin position="13"/>
        <end position="18"/>
    </location>
</feature>
<feature type="active site" description="Glycyl thioester intermediate">
    <location>
        <position position="93"/>
    </location>
</feature>
<feature type="site" description="Interaction with RANBP2">
    <location>
        <position position="4"/>
    </location>
</feature>
<feature type="site" description="Interaction with RANBP2">
    <location>
        <position position="25"/>
    </location>
</feature>
<feature type="site" description="Interaction with RANBP2">
    <location>
        <position position="57"/>
    </location>
</feature>
<feature type="site" description="Substrate binding">
    <location>
        <begin position="100"/>
        <end position="101"/>
    </location>
</feature>
<feature type="modified residue" description="N-acetylserine" evidence="50 52">
    <location>
        <position position="2"/>
    </location>
</feature>
<feature type="modified residue" description="N6-acetyllysine" evidence="51">
    <location>
        <position position="65"/>
    </location>
</feature>
<feature type="modified residue" description="Phosphoserine; by CDK1" evidence="32 53">
    <location>
        <position position="71"/>
    </location>
</feature>
<feature type="cross-link" description="Glycyl lysine isopeptide (Lys-Gly) (interchain with G-Cter in SUMO2); alternate" evidence="58">
    <location>
        <position position="18"/>
    </location>
</feature>
<feature type="cross-link" description="Glycyl lysine isopeptide (Lys-Gly) (interchain with G-Cter in ubiquitin); alternate">
    <location>
        <position position="18"/>
    </location>
</feature>
<feature type="cross-link" description="Glycyl lysine isopeptide (Lys-Gly) (interchain with G-Cter in SUMO2)" evidence="56 58">
    <location>
        <position position="48"/>
    </location>
</feature>
<feature type="cross-link" description="Glycyl lysine isopeptide (Lys-Gly) (interchain with G-Cter in SUMO1); alternate" evidence="54">
    <location>
        <position position="49"/>
    </location>
</feature>
<feature type="cross-link" description="Glycyl lysine isopeptide (Lys-Gly) (interchain with G-Cter in SUMO2); alternate" evidence="54 55 56 57 58">
    <location>
        <position position="49"/>
    </location>
</feature>
<feature type="cross-link" description="Glycyl lysine isopeptide (Lys-Gly) (interchain with G-Cter in SUMO2)" evidence="58">
    <location>
        <position position="101"/>
    </location>
</feature>
<feature type="mutagenesis site" description="Impairs binding to SUMO1 and catalytic activity." evidence="11">
    <original>RK</original>
    <variation>AA</variation>
    <location>
        <begin position="13"/>
        <end position="14"/>
    </location>
</feature>
<feature type="mutagenesis site" description="Impairs binding to SUMO1 and catalytic activity." evidence="11">
    <original>RK</original>
    <variation>AA</variation>
    <location>
        <begin position="17"/>
        <end position="18"/>
    </location>
</feature>
<feature type="mutagenesis site" description="Impairs binding to RANBP2." evidence="13">
    <original>F</original>
    <variation>A</variation>
    <location>
        <position position="22"/>
    </location>
</feature>
<feature type="mutagenesis site" description="Impairs binding to RANBP2." evidence="13">
    <original>V</original>
    <variation>A</variation>
    <location>
        <position position="25"/>
    </location>
</feature>
<feature type="mutagenesis site" description="Impairs binding to RANBP2." evidence="13">
    <original>V</original>
    <variation>A</variation>
    <location>
        <position position="27"/>
    </location>
</feature>
<feature type="mutagenesis site" description="Slightly impairs binding to RANBP2." evidence="13">
    <original>E</original>
    <variation>A</variation>
    <location>
        <position position="42"/>
    </location>
</feature>
<feature type="mutagenesis site" description="Slightly impairs binding to RANBP2." evidence="13">
    <original>K</original>
    <variation>A</variation>
    <location>
        <position position="48"/>
    </location>
</feature>
<feature type="mutagenesis site" description="Slightly impairs binding to RANBP2." evidence="13">
    <original>E</original>
    <variation>A</variation>
    <location>
        <position position="54"/>
    </location>
</feature>
<feature type="mutagenesis site" description="Impairs binding to RANBP2." evidence="13">
    <original>L</original>
    <variation>A</variation>
    <location>
        <position position="57"/>
    </location>
</feature>
<feature type="mutagenesis site" description="Impairs binding to RANBP2." evidence="13">
    <original>K</original>
    <variation>A</variation>
    <location>
        <position position="59"/>
    </location>
</feature>
<feature type="mutagenesis site" description="Slightly impairs binding to RANBP2." evidence="13">
    <original>R</original>
    <variation>A</variation>
    <location>
        <position position="61"/>
    </location>
</feature>
<feature type="mutagenesis site" description="Impairs catalytic activity." evidence="17">
    <original>N</original>
    <variation>Q</variation>
    <location>
        <position position="85"/>
    </location>
</feature>
<feature type="mutagenesis site" description="Impairs catalytic activity." evidence="17">
    <original>Y</original>
    <variation>A</variation>
    <location>
        <position position="87"/>
    </location>
</feature>
<feature type="mutagenesis site" description="Loss of enhancement of sumoylation by RWDD3. No effect on RWDD3 protein levels.">
    <original>C</original>
    <variation>S</variation>
    <location>
        <position position="93"/>
    </location>
</feature>
<feature type="mutagenesis site" description="Impairs catalytic activity." evidence="10">
    <original>DK</original>
    <variation>AA</variation>
    <location>
        <begin position="100"/>
        <end position="101"/>
    </location>
</feature>
<feature type="mutagenesis site" description="Impairs catalytic activity." evidence="17">
    <original>D</original>
    <variation>A</variation>
    <location>
        <position position="127"/>
    </location>
</feature>
<feature type="mutagenesis site" description="No effect on catalytic activity." evidence="17">
    <original>D</original>
    <variation>S</variation>
    <location>
        <position position="127"/>
    </location>
</feature>
<feature type="sequence conflict" description="In Ref. 6; AAC50603." evidence="49" ref="6">
    <original>K</original>
    <variation>P</variation>
    <location>
        <position position="18"/>
    </location>
</feature>
<feature type="sequence conflict" description="In Ref. 6; AAC50603." evidence="49" ref="6">
    <original>VYPS</original>
    <variation>GVPF</variation>
    <location>
        <begin position="86"/>
        <end position="89"/>
    </location>
</feature>
<feature type="helix" evidence="60">
    <location>
        <begin position="3"/>
        <end position="18"/>
    </location>
</feature>
<feature type="strand" evidence="60">
    <location>
        <begin position="25"/>
        <end position="30"/>
    </location>
</feature>
<feature type="strand" evidence="59">
    <location>
        <begin position="32"/>
        <end position="34"/>
    </location>
</feature>
<feature type="strand" evidence="60">
    <location>
        <begin position="36"/>
        <end position="46"/>
    </location>
</feature>
<feature type="turn" evidence="60">
    <location>
        <begin position="52"/>
        <end position="55"/>
    </location>
</feature>
<feature type="strand" evidence="60">
    <location>
        <begin position="57"/>
        <end position="63"/>
    </location>
</feature>
<feature type="turn" evidence="60">
    <location>
        <begin position="66"/>
        <end position="69"/>
    </location>
</feature>
<feature type="strand" evidence="60">
    <location>
        <begin position="74"/>
        <end position="79"/>
    </location>
</feature>
<feature type="strand" evidence="60">
    <location>
        <begin position="90"/>
        <end position="92"/>
    </location>
</feature>
<feature type="helix" evidence="60">
    <location>
        <begin position="95"/>
        <end position="97"/>
    </location>
</feature>
<feature type="turn" evidence="60">
    <location>
        <begin position="99"/>
        <end position="102"/>
    </location>
</feature>
<feature type="helix" evidence="60">
    <location>
        <begin position="109"/>
        <end position="121"/>
    </location>
</feature>
<feature type="helix" evidence="60">
    <location>
        <begin position="131"/>
        <end position="139"/>
    </location>
</feature>
<feature type="helix" evidence="60">
    <location>
        <begin position="141"/>
        <end position="154"/>
    </location>
</feature>
<proteinExistence type="evidence at protein level"/>